<proteinExistence type="evidence at protein level"/>
<evidence type="ECO:0000250" key="1">
    <source>
        <dbReference type="UniProtKB" id="E9Q7G0"/>
    </source>
</evidence>
<evidence type="ECO:0000255" key="2"/>
<evidence type="ECO:0000256" key="3">
    <source>
        <dbReference type="SAM" id="MobiDB-lite"/>
    </source>
</evidence>
<evidence type="ECO:0000269" key="4">
    <source>
    </source>
</evidence>
<evidence type="ECO:0000269" key="5">
    <source>
    </source>
</evidence>
<evidence type="ECO:0000269" key="6">
    <source>
    </source>
</evidence>
<evidence type="ECO:0000269" key="7">
    <source>
    </source>
</evidence>
<evidence type="ECO:0000269" key="8">
    <source>
    </source>
</evidence>
<evidence type="ECO:0000269" key="9">
    <source>
    </source>
</evidence>
<evidence type="ECO:0000269" key="10">
    <source>
    </source>
</evidence>
<evidence type="ECO:0000269" key="11">
    <source>
    </source>
</evidence>
<evidence type="ECO:0000269" key="12">
    <source>
    </source>
</evidence>
<evidence type="ECO:0000269" key="13">
    <source>
    </source>
</evidence>
<evidence type="ECO:0000269" key="14">
    <source>
    </source>
</evidence>
<evidence type="ECO:0000269" key="15">
    <source>
    </source>
</evidence>
<evidence type="ECO:0000269" key="16">
    <source>
    </source>
</evidence>
<evidence type="ECO:0000269" key="17">
    <source>
    </source>
</evidence>
<evidence type="ECO:0000269" key="18">
    <source>
    </source>
</evidence>
<evidence type="ECO:0000269" key="19">
    <source>
    </source>
</evidence>
<evidence type="ECO:0000269" key="20">
    <source>
    </source>
</evidence>
<evidence type="ECO:0000269" key="21">
    <source>
    </source>
</evidence>
<evidence type="ECO:0000269" key="22">
    <source>
    </source>
</evidence>
<evidence type="ECO:0000269" key="23">
    <source>
    </source>
</evidence>
<evidence type="ECO:0000269" key="24">
    <source>
    </source>
</evidence>
<evidence type="ECO:0000269" key="25">
    <source>
    </source>
</evidence>
<evidence type="ECO:0000269" key="26">
    <source>
    </source>
</evidence>
<evidence type="ECO:0000269" key="27">
    <source>
    </source>
</evidence>
<evidence type="ECO:0000269" key="28">
    <source>
    </source>
</evidence>
<evidence type="ECO:0000269" key="29">
    <source>
    </source>
</evidence>
<evidence type="ECO:0000269" key="30">
    <source>
    </source>
</evidence>
<evidence type="ECO:0000269" key="31">
    <source>
    </source>
</evidence>
<evidence type="ECO:0000269" key="32">
    <source>
    </source>
</evidence>
<evidence type="ECO:0000269" key="33">
    <source>
    </source>
</evidence>
<evidence type="ECO:0000269" key="34">
    <source>
    </source>
</evidence>
<evidence type="ECO:0000269" key="35">
    <source>
    </source>
</evidence>
<evidence type="ECO:0000303" key="36">
    <source>
    </source>
</evidence>
<evidence type="ECO:0000303" key="37">
    <source>
    </source>
</evidence>
<evidence type="ECO:0000303" key="38">
    <source>
    </source>
</evidence>
<evidence type="ECO:0000303" key="39">
    <source>
    </source>
</evidence>
<evidence type="ECO:0000303" key="40">
    <source>
    </source>
</evidence>
<evidence type="ECO:0000303" key="41">
    <source>
    </source>
</evidence>
<evidence type="ECO:0000303" key="42">
    <source>
    </source>
</evidence>
<evidence type="ECO:0000305" key="43"/>
<evidence type="ECO:0000305" key="44">
    <source>
    </source>
</evidence>
<evidence type="ECO:0000305" key="45">
    <source>
    </source>
</evidence>
<evidence type="ECO:0000312" key="46">
    <source>
        <dbReference type="HGNC" id="HGNC:8059"/>
    </source>
</evidence>
<evidence type="ECO:0007744" key="47">
    <source>
    </source>
</evidence>
<evidence type="ECO:0007744" key="48">
    <source>
    </source>
</evidence>
<evidence type="ECO:0007744" key="49">
    <source>
    </source>
</evidence>
<evidence type="ECO:0007744" key="50">
    <source>
    </source>
</evidence>
<evidence type="ECO:0007744" key="51">
    <source>
    </source>
</evidence>
<evidence type="ECO:0007744" key="52">
    <source>
    </source>
</evidence>
<evidence type="ECO:0007744" key="53">
    <source>
    </source>
</evidence>
<evidence type="ECO:0007744" key="54">
    <source>
    </source>
</evidence>
<evidence type="ECO:0007744" key="55">
    <source>
    </source>
</evidence>
<evidence type="ECO:0007744" key="56">
    <source>
    </source>
</evidence>
<evidence type="ECO:0007744" key="57">
    <source>
    </source>
</evidence>
<evidence type="ECO:0007744" key="58">
    <source>
    </source>
</evidence>
<evidence type="ECO:0007744" key="59">
    <source>
    </source>
</evidence>
<evidence type="ECO:0007744" key="60">
    <source>
    </source>
</evidence>
<evidence type="ECO:0007744" key="61">
    <source>
    </source>
</evidence>
<evidence type="ECO:0007744" key="62">
    <source>
    </source>
</evidence>
<evidence type="ECO:0007744" key="63">
    <source>
    </source>
</evidence>
<evidence type="ECO:0007829" key="64">
    <source>
        <dbReference type="PDB" id="3RO2"/>
    </source>
</evidence>
<evidence type="ECO:0007829" key="65">
    <source>
        <dbReference type="PDB" id="5GXW"/>
    </source>
</evidence>
<evidence type="ECO:0007829" key="66">
    <source>
        <dbReference type="PDB" id="6QJA"/>
    </source>
</evidence>
<name>NUMA1_HUMAN</name>
<organism>
    <name type="scientific">Homo sapiens</name>
    <name type="common">Human</name>
    <dbReference type="NCBI Taxonomy" id="9606"/>
    <lineage>
        <taxon>Eukaryota</taxon>
        <taxon>Metazoa</taxon>
        <taxon>Chordata</taxon>
        <taxon>Craniata</taxon>
        <taxon>Vertebrata</taxon>
        <taxon>Euteleostomi</taxon>
        <taxon>Mammalia</taxon>
        <taxon>Eutheria</taxon>
        <taxon>Euarchontoglires</taxon>
        <taxon>Primates</taxon>
        <taxon>Haplorrhini</taxon>
        <taxon>Catarrhini</taxon>
        <taxon>Hominidae</taxon>
        <taxon>Homo</taxon>
    </lineage>
</organism>
<dbReference type="EMBL" id="Z14227">
    <property type="status" value="NOT_ANNOTATED_CDS"/>
    <property type="molecule type" value="mRNA"/>
</dbReference>
<dbReference type="EMBL" id="Z14228">
    <property type="status" value="NOT_ANNOTATED_CDS"/>
    <property type="molecule type" value="mRNA"/>
</dbReference>
<dbReference type="EMBL" id="Z14229">
    <property type="status" value="NOT_ANNOTATED_CDS"/>
    <property type="molecule type" value="mRNA"/>
</dbReference>
<dbReference type="EMBL" id="Z11583">
    <property type="protein sequence ID" value="CAA77669.1"/>
    <property type="molecule type" value="mRNA"/>
</dbReference>
<dbReference type="EMBL" id="Z11584">
    <property type="protein sequence ID" value="CAA77670.1"/>
    <property type="status" value="ALT_FRAME"/>
    <property type="molecule type" value="mRNA"/>
</dbReference>
<dbReference type="EMBL" id="AP002490">
    <property type="status" value="NOT_ANNOTATED_CDS"/>
    <property type="molecule type" value="Genomic_DNA"/>
</dbReference>
<dbReference type="EMBL" id="CH471076">
    <property type="protein sequence ID" value="EAW74826.1"/>
    <property type="molecule type" value="Genomic_DNA"/>
</dbReference>
<dbReference type="EMBL" id="BC004165">
    <property type="protein sequence ID" value="AAH04165.1"/>
    <property type="molecule type" value="mRNA"/>
</dbReference>
<dbReference type="CCDS" id="CCDS31633.1">
    <molecule id="Q14980-1"/>
</dbReference>
<dbReference type="CCDS" id="CCDS66156.1">
    <molecule id="Q14980-2"/>
</dbReference>
<dbReference type="PIR" id="A42184">
    <property type="entry name" value="A42184"/>
</dbReference>
<dbReference type="RefSeq" id="NP_001273490.1">
    <molecule id="Q14980-2"/>
    <property type="nucleotide sequence ID" value="NM_001286561.2"/>
</dbReference>
<dbReference type="RefSeq" id="NP_006176.2">
    <molecule id="Q14980-1"/>
    <property type="nucleotide sequence ID" value="NM_006185.4"/>
</dbReference>
<dbReference type="RefSeq" id="XP_006718627.1">
    <molecule id="Q14980-1"/>
    <property type="nucleotide sequence ID" value="XM_006718564.3"/>
</dbReference>
<dbReference type="RefSeq" id="XP_011543368.1">
    <molecule id="Q14980-2"/>
    <property type="nucleotide sequence ID" value="XM_011545066.3"/>
</dbReference>
<dbReference type="RefSeq" id="XP_016873319.1">
    <molecule id="Q14980-2"/>
    <property type="nucleotide sequence ID" value="XM_017017830.2"/>
</dbReference>
<dbReference type="RefSeq" id="XP_016873320.1">
    <molecule id="Q14980-2"/>
    <property type="nucleotide sequence ID" value="XM_017017831.2"/>
</dbReference>
<dbReference type="RefSeq" id="XP_024304324.1">
    <molecule id="Q14980-1"/>
    <property type="nucleotide sequence ID" value="XM_024448556.2"/>
</dbReference>
<dbReference type="RefSeq" id="XP_047282964.1">
    <molecule id="Q14980-1"/>
    <property type="nucleotide sequence ID" value="XM_047427008.1"/>
</dbReference>
<dbReference type="RefSeq" id="XP_047282965.1">
    <molecule id="Q14980-1"/>
    <property type="nucleotide sequence ID" value="XM_047427009.1"/>
</dbReference>
<dbReference type="RefSeq" id="XP_047282966.1">
    <molecule id="Q14980-1"/>
    <property type="nucleotide sequence ID" value="XM_047427010.1"/>
</dbReference>
<dbReference type="RefSeq" id="XP_047282967.1">
    <molecule id="Q14980-1"/>
    <property type="nucleotide sequence ID" value="XM_047427011.1"/>
</dbReference>
<dbReference type="RefSeq" id="XP_047282968.1">
    <molecule id="Q14980-1"/>
    <property type="nucleotide sequence ID" value="XM_047427012.1"/>
</dbReference>
<dbReference type="RefSeq" id="XP_047282969.1">
    <molecule id="Q14980-1"/>
    <property type="nucleotide sequence ID" value="XM_047427013.1"/>
</dbReference>
<dbReference type="RefSeq" id="XP_047282970.1">
    <molecule id="Q14980-1"/>
    <property type="nucleotide sequence ID" value="XM_047427014.1"/>
</dbReference>
<dbReference type="RefSeq" id="XP_047282971.1">
    <molecule id="Q14980-1"/>
    <property type="nucleotide sequence ID" value="XM_047427015.1"/>
</dbReference>
<dbReference type="RefSeq" id="XP_047282972.1">
    <molecule id="Q14980-1"/>
    <property type="nucleotide sequence ID" value="XM_047427016.1"/>
</dbReference>
<dbReference type="RefSeq" id="XP_047282973.1">
    <molecule id="Q14980-1"/>
    <property type="nucleotide sequence ID" value="XM_047427017.1"/>
</dbReference>
<dbReference type="RefSeq" id="XP_047282974.1">
    <molecule id="Q14980-2"/>
    <property type="nucleotide sequence ID" value="XM_047427018.1"/>
</dbReference>
<dbReference type="RefSeq" id="XP_047282975.1">
    <molecule id="Q14980-2"/>
    <property type="nucleotide sequence ID" value="XM_047427019.1"/>
</dbReference>
<dbReference type="RefSeq" id="XP_047282976.1">
    <molecule id="Q14980-2"/>
    <property type="nucleotide sequence ID" value="XM_047427020.1"/>
</dbReference>
<dbReference type="RefSeq" id="XP_047282977.1">
    <molecule id="Q14980-2"/>
    <property type="nucleotide sequence ID" value="XM_047427021.1"/>
</dbReference>
<dbReference type="RefSeq" id="XP_047282978.1">
    <molecule id="Q14980-2"/>
    <property type="nucleotide sequence ID" value="XM_047427022.1"/>
</dbReference>
<dbReference type="RefSeq" id="XP_047282979.1">
    <molecule id="Q14980-2"/>
    <property type="nucleotide sequence ID" value="XM_047427023.1"/>
</dbReference>
<dbReference type="RefSeq" id="XP_047282980.1">
    <molecule id="Q14980-2"/>
    <property type="nucleotide sequence ID" value="XM_047427024.1"/>
</dbReference>
<dbReference type="RefSeq" id="XP_047282981.1">
    <molecule id="Q14980-2"/>
    <property type="nucleotide sequence ID" value="XM_047427025.1"/>
</dbReference>
<dbReference type="RefSeq" id="XP_047282982.1">
    <molecule id="Q14980-2"/>
    <property type="nucleotide sequence ID" value="XM_047427026.1"/>
</dbReference>
<dbReference type="RefSeq" id="XP_054224923.1">
    <molecule id="Q14980-1"/>
    <property type="nucleotide sequence ID" value="XM_054368948.1"/>
</dbReference>
<dbReference type="RefSeq" id="XP_054224924.1">
    <molecule id="Q14980-1"/>
    <property type="nucleotide sequence ID" value="XM_054368949.1"/>
</dbReference>
<dbReference type="RefSeq" id="XP_054224925.1">
    <molecule id="Q14980-1"/>
    <property type="nucleotide sequence ID" value="XM_054368950.1"/>
</dbReference>
<dbReference type="RefSeq" id="XP_054224926.1">
    <molecule id="Q14980-1"/>
    <property type="nucleotide sequence ID" value="XM_054368951.1"/>
</dbReference>
<dbReference type="RefSeq" id="XP_054224927.1">
    <molecule id="Q14980-1"/>
    <property type="nucleotide sequence ID" value="XM_054368952.1"/>
</dbReference>
<dbReference type="RefSeq" id="XP_054224928.1">
    <molecule id="Q14980-1"/>
    <property type="nucleotide sequence ID" value="XM_054368953.1"/>
</dbReference>
<dbReference type="RefSeq" id="XP_054224929.1">
    <molecule id="Q14980-1"/>
    <property type="nucleotide sequence ID" value="XM_054368954.1"/>
</dbReference>
<dbReference type="RefSeq" id="XP_054224930.1">
    <molecule id="Q14980-1"/>
    <property type="nucleotide sequence ID" value="XM_054368955.1"/>
</dbReference>
<dbReference type="RefSeq" id="XP_054224931.1">
    <molecule id="Q14980-1"/>
    <property type="nucleotide sequence ID" value="XM_054368956.1"/>
</dbReference>
<dbReference type="RefSeq" id="XP_054224932.1">
    <molecule id="Q14980-1"/>
    <property type="nucleotide sequence ID" value="XM_054368957.1"/>
</dbReference>
<dbReference type="RefSeq" id="XP_054224933.1">
    <molecule id="Q14980-1"/>
    <property type="nucleotide sequence ID" value="XM_054368958.1"/>
</dbReference>
<dbReference type="RefSeq" id="XP_054224934.1">
    <molecule id="Q14980-1"/>
    <property type="nucleotide sequence ID" value="XM_054368959.1"/>
</dbReference>
<dbReference type="RefSeq" id="XP_054224935.1">
    <molecule id="Q14980-2"/>
    <property type="nucleotide sequence ID" value="XM_054368960.1"/>
</dbReference>
<dbReference type="RefSeq" id="XP_054224936.1">
    <molecule id="Q14980-2"/>
    <property type="nucleotide sequence ID" value="XM_054368961.1"/>
</dbReference>
<dbReference type="RefSeq" id="XP_054224937.1">
    <molecule id="Q14980-2"/>
    <property type="nucleotide sequence ID" value="XM_054368962.1"/>
</dbReference>
<dbReference type="RefSeq" id="XP_054224938.1">
    <molecule id="Q14980-2"/>
    <property type="nucleotide sequence ID" value="XM_054368963.1"/>
</dbReference>
<dbReference type="RefSeq" id="XP_054224939.1">
    <molecule id="Q14980-2"/>
    <property type="nucleotide sequence ID" value="XM_054368964.1"/>
</dbReference>
<dbReference type="RefSeq" id="XP_054224940.1">
    <molecule id="Q14980-2"/>
    <property type="nucleotide sequence ID" value="XM_054368965.1"/>
</dbReference>
<dbReference type="RefSeq" id="XP_054224941.1">
    <molecule id="Q14980-2"/>
    <property type="nucleotide sequence ID" value="XM_054368966.1"/>
</dbReference>
<dbReference type="RefSeq" id="XP_054224942.1">
    <molecule id="Q14980-2"/>
    <property type="nucleotide sequence ID" value="XM_054368967.1"/>
</dbReference>
<dbReference type="RefSeq" id="XP_054224943.1">
    <molecule id="Q14980-2"/>
    <property type="nucleotide sequence ID" value="XM_054368968.1"/>
</dbReference>
<dbReference type="RefSeq" id="XP_054224944.1">
    <molecule id="Q14980-2"/>
    <property type="nucleotide sequence ID" value="XM_054368969.1"/>
</dbReference>
<dbReference type="RefSeq" id="XP_054224945.1">
    <molecule id="Q14980-2"/>
    <property type="nucleotide sequence ID" value="XM_054368970.1"/>
</dbReference>
<dbReference type="RefSeq" id="XP_054224946.1">
    <molecule id="Q14980-2"/>
    <property type="nucleotide sequence ID" value="XM_054368971.1"/>
</dbReference>
<dbReference type="PDB" id="3RO2">
    <property type="method" value="X-ray"/>
    <property type="resolution" value="2.30 A"/>
    <property type="chains" value="B=1899-1926"/>
</dbReference>
<dbReference type="PDB" id="5GXW">
    <property type="method" value="X-ray"/>
    <property type="resolution" value="2.39 A"/>
    <property type="chains" value="B=1984-2010"/>
</dbReference>
<dbReference type="PDB" id="6HC2">
    <property type="method" value="X-ray"/>
    <property type="resolution" value="4.31 A"/>
    <property type="chains" value="B/D/F/H/J/L/N/P/R/T/V/X=1860-1928"/>
</dbReference>
<dbReference type="PDB" id="6QJA">
    <property type="method" value="X-ray"/>
    <property type="resolution" value="1.54 A"/>
    <property type="chains" value="A/B/C/D=1-153"/>
</dbReference>
<dbReference type="PDBsum" id="3RO2"/>
<dbReference type="PDBsum" id="5GXW"/>
<dbReference type="PDBsum" id="6HC2"/>
<dbReference type="PDBsum" id="6QJA"/>
<dbReference type="SMR" id="Q14980"/>
<dbReference type="BioGRID" id="110980">
    <property type="interactions" value="486"/>
</dbReference>
<dbReference type="CORUM" id="Q14980"/>
<dbReference type="DIP" id="DIP-32937N"/>
<dbReference type="ELM" id="Q14980"/>
<dbReference type="FunCoup" id="Q14980">
    <property type="interactions" value="1546"/>
</dbReference>
<dbReference type="IntAct" id="Q14980">
    <property type="interactions" value="285"/>
</dbReference>
<dbReference type="MINT" id="Q14980"/>
<dbReference type="STRING" id="9606.ENSP00000377298"/>
<dbReference type="CarbonylDB" id="Q14980"/>
<dbReference type="GlyConnect" id="2887">
    <property type="glycosylation" value="1 O-GlcNAc glycan (1 site)"/>
</dbReference>
<dbReference type="GlyCosmos" id="Q14980">
    <property type="glycosylation" value="7 sites, 1 glycan"/>
</dbReference>
<dbReference type="GlyGen" id="Q14980">
    <property type="glycosylation" value="23 sites, 1 O-linked glycan (23 sites)"/>
</dbReference>
<dbReference type="iPTMnet" id="Q14980"/>
<dbReference type="MetOSite" id="Q14980"/>
<dbReference type="PhosphoSitePlus" id="Q14980"/>
<dbReference type="SwissPalm" id="Q14980"/>
<dbReference type="BioMuta" id="NUMA1"/>
<dbReference type="DMDM" id="145559510"/>
<dbReference type="CPTAC" id="CPTAC-5920"/>
<dbReference type="CPTAC" id="CPTAC-937"/>
<dbReference type="jPOST" id="Q14980"/>
<dbReference type="MassIVE" id="Q14980"/>
<dbReference type="PaxDb" id="9606-ENSP00000377298"/>
<dbReference type="PeptideAtlas" id="Q14980"/>
<dbReference type="ProteomicsDB" id="38621"/>
<dbReference type="ProteomicsDB" id="60272">
    <molecule id="Q14980-1"/>
</dbReference>
<dbReference type="ProteomicsDB" id="60273">
    <molecule id="Q14980-2"/>
</dbReference>
<dbReference type="ProteomicsDB" id="78989"/>
<dbReference type="Pumba" id="Q14980"/>
<dbReference type="Antibodypedia" id="16895">
    <property type="antibodies" value="434 antibodies from 38 providers"/>
</dbReference>
<dbReference type="CPTC" id="Q14980">
    <property type="antibodies" value="1 antibody"/>
</dbReference>
<dbReference type="DNASU" id="4926"/>
<dbReference type="Ensembl" id="ENST00000351960.10">
    <molecule id="Q14980-5"/>
    <property type="protein sequence ID" value="ENSP00000260051.8"/>
    <property type="gene ID" value="ENSG00000137497.19"/>
</dbReference>
<dbReference type="Ensembl" id="ENST00000358965.10">
    <molecule id="Q14980-2"/>
    <property type="protein sequence ID" value="ENSP00000351851.6"/>
    <property type="gene ID" value="ENSG00000137497.19"/>
</dbReference>
<dbReference type="Ensembl" id="ENST00000393695.8">
    <molecule id="Q14980-1"/>
    <property type="protein sequence ID" value="ENSP00000377298.4"/>
    <property type="gene ID" value="ENSG00000137497.19"/>
</dbReference>
<dbReference type="Ensembl" id="ENST00000613205.4">
    <molecule id="Q14980-5"/>
    <property type="protein sequence ID" value="ENSP00000480172.1"/>
    <property type="gene ID" value="ENSG00000137497.19"/>
</dbReference>
<dbReference type="Ensembl" id="ENST00000620566.4">
    <molecule id="Q14980-2"/>
    <property type="protein sequence ID" value="ENSP00000478624.1"/>
    <property type="gene ID" value="ENSG00000137497.19"/>
</dbReference>
<dbReference type="GeneID" id="4926"/>
<dbReference type="KEGG" id="hsa:4926"/>
<dbReference type="MANE-Select" id="ENST00000393695.8">
    <property type="protein sequence ID" value="ENSP00000377298.4"/>
    <property type="RefSeq nucleotide sequence ID" value="NM_006185.4"/>
    <property type="RefSeq protein sequence ID" value="NP_006176.2"/>
</dbReference>
<dbReference type="UCSC" id="uc001ork.3">
    <molecule id="Q14980-1"/>
    <property type="organism name" value="human"/>
</dbReference>
<dbReference type="AGR" id="HGNC:8059"/>
<dbReference type="CTD" id="4926"/>
<dbReference type="DisGeNET" id="4926"/>
<dbReference type="GeneCards" id="NUMA1"/>
<dbReference type="HGNC" id="HGNC:8059">
    <property type="gene designation" value="NUMA1"/>
</dbReference>
<dbReference type="HPA" id="ENSG00000137497">
    <property type="expression patterns" value="Low tissue specificity"/>
</dbReference>
<dbReference type="MalaCards" id="NUMA1"/>
<dbReference type="MIM" id="164009">
    <property type="type" value="gene"/>
</dbReference>
<dbReference type="neXtProt" id="NX_Q14980"/>
<dbReference type="OpenTargets" id="ENSG00000137497"/>
<dbReference type="Orphanet" id="520">
    <property type="disease" value="Acute promyelocytic leukemia"/>
</dbReference>
<dbReference type="PharmGKB" id="PA31844"/>
<dbReference type="VEuPathDB" id="HostDB:ENSG00000137497"/>
<dbReference type="eggNOG" id="ENOG502QTDA">
    <property type="taxonomic scope" value="Eukaryota"/>
</dbReference>
<dbReference type="GeneTree" id="ENSGT00950000183078"/>
<dbReference type="HOGENOM" id="CLU_006666_1_0_1"/>
<dbReference type="InParanoid" id="Q14980"/>
<dbReference type="OMA" id="EAFRQCQ"/>
<dbReference type="OrthoDB" id="2436455at2759"/>
<dbReference type="PAN-GO" id="Q14980">
    <property type="GO annotations" value="5 GO annotations based on evolutionary models"/>
</dbReference>
<dbReference type="PhylomeDB" id="Q14980"/>
<dbReference type="TreeFam" id="TF334442"/>
<dbReference type="PathwayCommons" id="Q14980"/>
<dbReference type="Reactome" id="R-HSA-380320">
    <property type="pathway name" value="Recruitment of NuMA to mitotic centrosomes"/>
</dbReference>
<dbReference type="Reactome" id="R-HSA-68875">
    <property type="pathway name" value="Mitotic Prophase"/>
</dbReference>
<dbReference type="SignaLink" id="Q14980"/>
<dbReference type="SIGNOR" id="Q14980"/>
<dbReference type="BioGRID-ORCS" id="4926">
    <property type="hits" value="475 hits in 1164 CRISPR screens"/>
</dbReference>
<dbReference type="CD-CODE" id="232F8A39">
    <property type="entry name" value="P-body"/>
</dbReference>
<dbReference type="CD-CODE" id="8C2F96ED">
    <property type="entry name" value="Centrosome"/>
</dbReference>
<dbReference type="CD-CODE" id="91857CE7">
    <property type="entry name" value="Nucleolus"/>
</dbReference>
<dbReference type="ChiTaRS" id="NUMA1">
    <property type="organism name" value="human"/>
</dbReference>
<dbReference type="GeneWiki" id="Nuclear_mitotic_apparatus_protein_1"/>
<dbReference type="GenomeRNAi" id="4926"/>
<dbReference type="Pharos" id="Q14980">
    <property type="development level" value="Tbio"/>
</dbReference>
<dbReference type="PRO" id="PR:Q14980"/>
<dbReference type="Proteomes" id="UP000005640">
    <property type="component" value="Chromosome 11"/>
</dbReference>
<dbReference type="RNAct" id="Q14980">
    <property type="molecule type" value="protein"/>
</dbReference>
<dbReference type="Bgee" id="ENSG00000137497">
    <property type="expression patterns" value="Expressed in right uterine tube and 207 other cell types or tissues"/>
</dbReference>
<dbReference type="ExpressionAtlas" id="Q14980">
    <property type="expression patterns" value="baseline and differential"/>
</dbReference>
<dbReference type="GO" id="GO:0005938">
    <property type="term" value="C:cell cortex"/>
    <property type="evidence" value="ECO:0000314"/>
    <property type="project" value="UniProtKB"/>
</dbReference>
<dbReference type="GO" id="GO:0099738">
    <property type="term" value="C:cell cortex region"/>
    <property type="evidence" value="ECO:0000314"/>
    <property type="project" value="UniProtKB"/>
</dbReference>
<dbReference type="GO" id="GO:0005813">
    <property type="term" value="C:centrosome"/>
    <property type="evidence" value="ECO:0000314"/>
    <property type="project" value="UniProtKB"/>
</dbReference>
<dbReference type="GO" id="GO:0005694">
    <property type="term" value="C:chromosome"/>
    <property type="evidence" value="ECO:0007669"/>
    <property type="project" value="UniProtKB-SubCell"/>
</dbReference>
<dbReference type="GO" id="GO:0055028">
    <property type="term" value="C:cortical microtubule"/>
    <property type="evidence" value="ECO:0000314"/>
    <property type="project" value="UniProtKB"/>
</dbReference>
<dbReference type="GO" id="GO:1905720">
    <property type="term" value="C:cytoplasmic microtubule bundle"/>
    <property type="evidence" value="ECO:0000314"/>
    <property type="project" value="UniProtKB"/>
</dbReference>
<dbReference type="GO" id="GO:0005829">
    <property type="term" value="C:cytosol"/>
    <property type="evidence" value="ECO:0000314"/>
    <property type="project" value="HPA"/>
</dbReference>
<dbReference type="GO" id="GO:0030425">
    <property type="term" value="C:dendrite"/>
    <property type="evidence" value="ECO:0007669"/>
    <property type="project" value="Ensembl"/>
</dbReference>
<dbReference type="GO" id="GO:0070062">
    <property type="term" value="C:extracellular exosome"/>
    <property type="evidence" value="ECO:0007005"/>
    <property type="project" value="UniProtKB"/>
</dbReference>
<dbReference type="GO" id="GO:0097575">
    <property type="term" value="C:lateral cell cortex"/>
    <property type="evidence" value="ECO:0000250"/>
    <property type="project" value="UniProtKB"/>
</dbReference>
<dbReference type="GO" id="GO:0016328">
    <property type="term" value="C:lateral plasma membrane"/>
    <property type="evidence" value="ECO:0007669"/>
    <property type="project" value="UniProtKB-SubCell"/>
</dbReference>
<dbReference type="GO" id="GO:0097427">
    <property type="term" value="C:microtubule bundle"/>
    <property type="evidence" value="ECO:0000314"/>
    <property type="project" value="UniProtKB"/>
</dbReference>
<dbReference type="GO" id="GO:0036449">
    <property type="term" value="C:microtubule minus-end"/>
    <property type="evidence" value="ECO:0000314"/>
    <property type="project" value="UniProtKB"/>
</dbReference>
<dbReference type="GO" id="GO:0035371">
    <property type="term" value="C:microtubule plus-end"/>
    <property type="evidence" value="ECO:0000314"/>
    <property type="project" value="UniProtKB"/>
</dbReference>
<dbReference type="GO" id="GO:0072686">
    <property type="term" value="C:mitotic spindle"/>
    <property type="evidence" value="ECO:0000314"/>
    <property type="project" value="UniProtKB"/>
</dbReference>
<dbReference type="GO" id="GO:0061673">
    <property type="term" value="C:mitotic spindle astral microtubule"/>
    <property type="evidence" value="ECO:0000314"/>
    <property type="project" value="UniProtKB"/>
</dbReference>
<dbReference type="GO" id="GO:1990023">
    <property type="term" value="C:mitotic spindle midzone"/>
    <property type="evidence" value="ECO:0000314"/>
    <property type="project" value="UniProtKB"/>
</dbReference>
<dbReference type="GO" id="GO:0097431">
    <property type="term" value="C:mitotic spindle pole"/>
    <property type="evidence" value="ECO:0000314"/>
    <property type="project" value="UniProtKB"/>
</dbReference>
<dbReference type="GO" id="GO:0043025">
    <property type="term" value="C:neuronal cell body"/>
    <property type="evidence" value="ECO:0007669"/>
    <property type="project" value="Ensembl"/>
</dbReference>
<dbReference type="GO" id="GO:0016363">
    <property type="term" value="C:nuclear matrix"/>
    <property type="evidence" value="ECO:0000314"/>
    <property type="project" value="UniProtKB"/>
</dbReference>
<dbReference type="GO" id="GO:0005654">
    <property type="term" value="C:nucleoplasm"/>
    <property type="evidence" value="ECO:0000314"/>
    <property type="project" value="HPA"/>
</dbReference>
<dbReference type="GO" id="GO:0005634">
    <property type="term" value="C:nucleus"/>
    <property type="evidence" value="ECO:0000314"/>
    <property type="project" value="UniProtKB"/>
</dbReference>
<dbReference type="GO" id="GO:0005886">
    <property type="term" value="C:plasma membrane"/>
    <property type="evidence" value="ECO:0000314"/>
    <property type="project" value="UniProtKB"/>
</dbReference>
<dbReference type="GO" id="GO:0032991">
    <property type="term" value="C:protein-containing complex"/>
    <property type="evidence" value="ECO:0000314"/>
    <property type="project" value="UniProtKB"/>
</dbReference>
<dbReference type="GO" id="GO:0005819">
    <property type="term" value="C:spindle"/>
    <property type="evidence" value="ECO:0000304"/>
    <property type="project" value="ProtInc"/>
</dbReference>
<dbReference type="GO" id="GO:0005876">
    <property type="term" value="C:spindle microtubule"/>
    <property type="evidence" value="ECO:0000314"/>
    <property type="project" value="UniProtKB"/>
</dbReference>
<dbReference type="GO" id="GO:0000922">
    <property type="term" value="C:spindle pole"/>
    <property type="evidence" value="ECO:0000314"/>
    <property type="project" value="UniProtKB"/>
</dbReference>
<dbReference type="GO" id="GO:0031616">
    <property type="term" value="C:spindle pole centrosome"/>
    <property type="evidence" value="ECO:0000314"/>
    <property type="project" value="UniProtKB"/>
</dbReference>
<dbReference type="GO" id="GO:0097718">
    <property type="term" value="F:disordered domain specific binding"/>
    <property type="evidence" value="ECO:0000315"/>
    <property type="project" value="CAFA"/>
</dbReference>
<dbReference type="GO" id="GO:0070840">
    <property type="term" value="F:dynein complex binding"/>
    <property type="evidence" value="ECO:0000314"/>
    <property type="project" value="UniProtKB"/>
</dbReference>
<dbReference type="GO" id="GO:0008017">
    <property type="term" value="F:microtubule binding"/>
    <property type="evidence" value="ECO:0000314"/>
    <property type="project" value="UniProtKB"/>
</dbReference>
<dbReference type="GO" id="GO:0051011">
    <property type="term" value="F:microtubule minus-end binding"/>
    <property type="evidence" value="ECO:0000314"/>
    <property type="project" value="UniProtKB"/>
</dbReference>
<dbReference type="GO" id="GO:0051010">
    <property type="term" value="F:microtubule plus-end binding"/>
    <property type="evidence" value="ECO:0000314"/>
    <property type="project" value="UniProtKB"/>
</dbReference>
<dbReference type="GO" id="GO:0035091">
    <property type="term" value="F:phosphatidylinositol binding"/>
    <property type="evidence" value="ECO:0000314"/>
    <property type="project" value="UniProtKB"/>
</dbReference>
<dbReference type="GO" id="GO:0019904">
    <property type="term" value="F:protein domain specific binding"/>
    <property type="evidence" value="ECO:0000353"/>
    <property type="project" value="UniProtKB"/>
</dbReference>
<dbReference type="GO" id="GO:0044877">
    <property type="term" value="F:protein-containing complex binding"/>
    <property type="evidence" value="ECO:0000314"/>
    <property type="project" value="UniProtKB"/>
</dbReference>
<dbReference type="GO" id="GO:0005198">
    <property type="term" value="F:structural molecule activity"/>
    <property type="evidence" value="ECO:0000304"/>
    <property type="project" value="ProtInc"/>
</dbReference>
<dbReference type="GO" id="GO:0015631">
    <property type="term" value="F:tubulin binding"/>
    <property type="evidence" value="ECO:0000314"/>
    <property type="project" value="UniProtKB"/>
</dbReference>
<dbReference type="GO" id="GO:0055048">
    <property type="term" value="P:anastral spindle assembly"/>
    <property type="evidence" value="ECO:0000315"/>
    <property type="project" value="UniProtKB"/>
</dbReference>
<dbReference type="GO" id="GO:0030953">
    <property type="term" value="P:astral microtubule organization"/>
    <property type="evidence" value="ECO:0000314"/>
    <property type="project" value="UniProtKB"/>
</dbReference>
<dbReference type="GO" id="GO:0051301">
    <property type="term" value="P:cell division"/>
    <property type="evidence" value="ECO:0007669"/>
    <property type="project" value="UniProtKB-KW"/>
</dbReference>
<dbReference type="GO" id="GO:0000132">
    <property type="term" value="P:establishment of mitotic spindle orientation"/>
    <property type="evidence" value="ECO:0000314"/>
    <property type="project" value="UniProtKB"/>
</dbReference>
<dbReference type="GO" id="GO:0051321">
    <property type="term" value="P:meiotic cell cycle"/>
    <property type="evidence" value="ECO:0007669"/>
    <property type="project" value="Ensembl"/>
</dbReference>
<dbReference type="GO" id="GO:0001578">
    <property type="term" value="P:microtubule bundle formation"/>
    <property type="evidence" value="ECO:0000315"/>
    <property type="project" value="UniProtKB"/>
</dbReference>
<dbReference type="GO" id="GO:0006997">
    <property type="term" value="P:nucleus organization"/>
    <property type="evidence" value="ECO:0000304"/>
    <property type="project" value="ProtInc"/>
</dbReference>
<dbReference type="GO" id="GO:0030513">
    <property type="term" value="P:positive regulation of BMP signaling pathway"/>
    <property type="evidence" value="ECO:0000250"/>
    <property type="project" value="UniProtKB"/>
</dbReference>
<dbReference type="GO" id="GO:0051984">
    <property type="term" value="P:positive regulation of chromosome segregation"/>
    <property type="evidence" value="ECO:0000315"/>
    <property type="project" value="UniProtKB"/>
</dbReference>
<dbReference type="GO" id="GO:1905820">
    <property type="term" value="P:positive regulation of chromosome separation"/>
    <property type="evidence" value="ECO:0000315"/>
    <property type="project" value="UniProtKB"/>
</dbReference>
<dbReference type="GO" id="GO:0051798">
    <property type="term" value="P:positive regulation of hair follicle development"/>
    <property type="evidence" value="ECO:0000250"/>
    <property type="project" value="UniProtKB"/>
</dbReference>
<dbReference type="GO" id="GO:0032388">
    <property type="term" value="P:positive regulation of intracellular transport"/>
    <property type="evidence" value="ECO:0000315"/>
    <property type="project" value="UniProtKB"/>
</dbReference>
<dbReference type="GO" id="GO:0045618">
    <property type="term" value="P:positive regulation of keratinocyte differentiation"/>
    <property type="evidence" value="ECO:0000250"/>
    <property type="project" value="UniProtKB"/>
</dbReference>
<dbReference type="GO" id="GO:0031116">
    <property type="term" value="P:positive regulation of microtubule polymerization"/>
    <property type="evidence" value="ECO:0000315"/>
    <property type="project" value="UniProtKB"/>
</dbReference>
<dbReference type="GO" id="GO:1902846">
    <property type="term" value="P:positive regulation of mitotic spindle elongation"/>
    <property type="evidence" value="ECO:0000315"/>
    <property type="project" value="UniProtKB"/>
</dbReference>
<dbReference type="GO" id="GO:1904778">
    <property type="term" value="P:positive regulation of protein localization to cell cortex"/>
    <property type="evidence" value="ECO:0000315"/>
    <property type="project" value="UniProtKB"/>
</dbReference>
<dbReference type="GO" id="GO:1902365">
    <property type="term" value="P:positive regulation of protein localization to spindle pole body"/>
    <property type="evidence" value="ECO:0000314"/>
    <property type="project" value="UniProtKB"/>
</dbReference>
<dbReference type="GO" id="GO:1905832">
    <property type="term" value="P:positive regulation of spindle assembly"/>
    <property type="evidence" value="ECO:0000315"/>
    <property type="project" value="UniProtKB"/>
</dbReference>
<dbReference type="GO" id="GO:0090235">
    <property type="term" value="P:regulation of metaphase plate congression"/>
    <property type="evidence" value="ECO:0000315"/>
    <property type="project" value="UniProtKB"/>
</dbReference>
<dbReference type="GO" id="GO:0060236">
    <property type="term" value="P:regulation of mitotic spindle organization"/>
    <property type="evidence" value="ECO:0000314"/>
    <property type="project" value="UniProtKB"/>
</dbReference>
<dbReference type="CDD" id="cd22224">
    <property type="entry name" value="HkD_NuMA"/>
    <property type="match status" value="1"/>
</dbReference>
<dbReference type="CDD" id="cd22298">
    <property type="entry name" value="NuMA_LGNBD"/>
    <property type="match status" value="1"/>
</dbReference>
<dbReference type="Gene3D" id="1.10.287.2610">
    <property type="match status" value="1"/>
</dbReference>
<dbReference type="InterPro" id="IPR051841">
    <property type="entry name" value="MT-Golgi_org_protein"/>
</dbReference>
<dbReference type="InterPro" id="IPR048726">
    <property type="entry name" value="NuMA_LGNBD"/>
</dbReference>
<dbReference type="InterPro" id="IPR048724">
    <property type="entry name" value="NuMA_N_HOOK"/>
</dbReference>
<dbReference type="PANTHER" id="PTHR18902:SF24">
    <property type="entry name" value="NUCLEAR MITOTIC APPARATUS PROTEIN 1"/>
    <property type="match status" value="1"/>
</dbReference>
<dbReference type="PANTHER" id="PTHR18902">
    <property type="entry name" value="NUCLEAR MITOTIC APPARATUS PROTEIN 1-RELATED"/>
    <property type="match status" value="1"/>
</dbReference>
<dbReference type="Pfam" id="PF21670">
    <property type="entry name" value="HOOK_N_NuMA"/>
    <property type="match status" value="1"/>
</dbReference>
<dbReference type="SUPFAM" id="SSF116907">
    <property type="entry name" value="Hook domain"/>
    <property type="match status" value="1"/>
</dbReference>
<protein>
    <recommendedName>
        <fullName evidence="46">Nuclear mitotic apparatus protein 1</fullName>
    </recommendedName>
    <alternativeName>
        <fullName evidence="42">Nuclear matrix protein-22</fullName>
        <shortName evidence="42">NMP-22</shortName>
    </alternativeName>
    <alternativeName>
        <fullName evidence="36 37">Nuclear mitotic apparatus protein</fullName>
        <shortName evidence="36 37">NuMA protein</shortName>
    </alternativeName>
    <alternativeName>
        <fullName evidence="40">SP-H antigen</fullName>
    </alternativeName>
</protein>
<comment type="function">
    <text evidence="1 6 7 9 11 14 15 16 19 20 21 22 23 24 25 26 27 30 32 33 44 45">Microtubule (MT)-binding protein that plays a role in the formation and maintenance of the spindle poles and the alignement and the segregation of chromosomes during mitotic cell division (PubMed:17172455, PubMed:19255246, PubMed:24996901, PubMed:26195665, PubMed:27462074, PubMed:7769006). Functions to tether the minus ends of MTs at the spindle poles, which is critical for the establishment and maintenance of the spindle poles (PubMed:11956313, PubMed:12445386). Plays a role in the establishment of the mitotic spindle orientation during metaphase and elongation during anaphase in a dynein-dynactin-dependent manner (PubMed:23870127, PubMed:24109598, PubMed:24996901, PubMed:26765568). In metaphase, part of a ternary complex composed of GPSM2 and G(i) alpha proteins, that regulates the recruitment and anchorage of the dynein-dynactin complex in the mitotic cell cortex regions situated above the two spindle poles, and hence regulates the correct oritentation of the mitotic spindle (PubMed:22327364, PubMed:23027904, PubMed:23921553). During anaphase, mediates the recruitment and accumulation of the dynein-dynactin complex at the cell membrane of the polar cortical region through direct association with phosphatidylinositol 4,5-bisphosphate (PI(4,5)P2), and hence participates in the regulation of the spindle elongation and chromosome segregation (PubMed:22327364, PubMed:23921553, PubMed:24371089, PubMed:24996901). Also binds to other polyanionic phosphoinositides, such as phosphatidylinositol 3-phosphate (PIP), lysophosphatidic acid (LPA) and phosphatidylinositol triphosphate (PIP3), in vitro (PubMed:24371089, PubMed:24996901). Also required for proper orientation of the mitotic spindle during asymmetric cell divisions (PubMed:21816348). Plays a role in mitotic MT aster assembly (PubMed:11163243, PubMed:11229403, PubMed:12445386). Involved in anastral spindle assembly (PubMed:25657325). Positively regulates TNKS protein localization to spindle poles in mitosis (PubMed:16076287). Highly abundant component of the nuclear matrix where it may serve a non-mitotic structural role, occupies the majority of the nuclear volume (PubMed:10075938). Required for epidermal differentiation and hair follicle morphogenesis (By similarity).</text>
</comment>
<comment type="subunit">
    <text evidence="1 4 5 6 7 8 9 10 11 14 15 18 19 20 21 23 25 27 30 31 32">Homodimer (PubMed:10075938). Also forms multiarm oligomers by association of C-terminal tail domains, oligomers may further assemble to form a hexagonal nuclear lattice-like network (PubMed:10075938). Associates with the dynein-dynactin complex; this association promotes the transport and accumulation of NUMA1 at the mitotic spindle poles that is inhibited by the BRISC complex in a PLK1-dependent manner (PubMed:10811826, PubMed:17172455, PubMed:22327364, PubMed:23027904, PubMed:26195665). Part of a spindle orientation complex at least composed of GNAI1, GPSM2 and NUMA1 (PubMed:26766442). Interacts (via C-terminus) with microtubules (MTs); this interaction is direct and promotes both MT bundle formation and stability in a dynein-dynactin complex- and CDK1-independent manner (PubMed:11956313, PubMed:12445386, PubMed:26765568). Interacts with EPB41 and EPB41L2; these interactions are negatively regulated by CDK1 during metaphase and are important for anaphase-specific localization of NUMA1 in symmetrically dividing cells (PubMed:23870127, PubMed:24996901). Interacts (via C-terminus) with GPSM2 (via TPR repeats); this interaction is direct, prevented by competitive binding of INSC, is inhibited in a PLK1-dependent manner, blocks the association of NUMA1 with MTs and inhibits NUMA1-induced MT bundle formation, prevents the association of NUMA1 with SPAG5, induces mitotic spindle pole localization of GPSM2, both metaphase cell cortex localization of NUMA1 and mitotic spindle organization (PubMed:11781568, PubMed:12445386, PubMed:21816348, PubMed:22327364, PubMed:24109598, PubMed:27462074). Does not interact with GPSM2 during anaphase (PubMed:23870127). Interacts (via C-terminus) with the nuclear importin alpha/importin beta receptor; this interaction is inhibited by RanGTP (PubMed:11163243). Interacts (via C-terminus) with KPNB1; this interaction is inhibited by RanGTP and the BRISC complex (PubMed:11229403, PubMed:26195665). Interacts with ABRAXAS2 and the BRISC complex; these interactions regulate mitotic spindle assembly (PubMed:26195665). Interacts (via N-terminal end of the coiled-coil domain) with RAE1; this interaction promotes mitotic spindle formation (PubMed:17172455). Interacts (via C-terminus) with SPAG5 (via C-terminus); this interaction promotes the recruitment of SPAG5 to the MTs at spindle poles in a dynein-dynactin-dependent manner and regulates mitotic spindle organization and proper chromosome alignment during mitosis (PubMed:27462074). Interacts with TNKS; this interaction occurs at the onset of mitosis (PubMed:12080061, PubMed:16076287). Interacts with TNKS2 (PubMed:12080061). Interacts with tubulin (PubMed:11956313). Interacts with KHDC3L (via C-terminus) (By similarity).</text>
</comment>
<comment type="interaction">
    <interactant intactId="EBI-521611">
        <id>Q14980</id>
    </interactant>
    <interactant intactId="EBI-2808286">
        <id>Q2TAC2</id>
        <label>CCDC57</label>
    </interactant>
    <organismsDiffer>false</organismsDiffer>
    <experiments>3</experiments>
</comment>
<comment type="interaction">
    <interactant intactId="EBI-521611">
        <id>Q14980</id>
    </interactant>
    <interactant intactId="EBI-10172181">
        <id>Q53SE7</id>
        <label>FLJ13057</label>
    </interactant>
    <organismsDiffer>false</organismsDiffer>
    <experiments>3</experiments>
</comment>
<comment type="interaction">
    <interactant intactId="EBI-521611">
        <id>Q14980</id>
    </interactant>
    <interactant intactId="EBI-618639">
        <id>P63096</id>
        <label>GNAI1</label>
    </interactant>
    <organismsDiffer>false</organismsDiffer>
    <experiments>4</experiments>
</comment>
<comment type="interaction">
    <interactant intactId="EBI-521611">
        <id>Q14980</id>
    </interactant>
    <interactant intactId="EBI-618655">
        <id>P81274</id>
        <label>GPSM2</label>
    </interactant>
    <organismsDiffer>false</organismsDiffer>
    <experiments>6</experiments>
</comment>
<comment type="interaction">
    <interactant intactId="EBI-521611">
        <id>Q14980</id>
    </interactant>
    <interactant intactId="EBI-2371606">
        <id>P19013</id>
        <label>KRT4</label>
    </interactant>
    <organismsDiffer>false</organismsDiffer>
    <experiments>2</experiments>
</comment>
<comment type="interaction">
    <interactant intactId="EBI-521611">
        <id>Q14980</id>
    </interactant>
    <interactant intactId="EBI-724495">
        <id>P78406</id>
        <label>RAE1</label>
    </interactant>
    <organismsDiffer>false</organismsDiffer>
    <experiments>7</experiments>
</comment>
<comment type="interaction">
    <interactant intactId="EBI-521611">
        <id>Q14980</id>
    </interactant>
    <interactant intactId="EBI-750109">
        <id>Q9NYB0</id>
        <label>TERF2IP</label>
    </interactant>
    <organismsDiffer>false</organismsDiffer>
    <experiments>2</experiments>
</comment>
<comment type="interaction">
    <interactant intactId="EBI-521611">
        <id>Q14980</id>
    </interactant>
    <interactant intactId="EBI-4398527">
        <id>Q9H2K2</id>
        <label>TNKS2</label>
    </interactant>
    <organismsDiffer>false</organismsDiffer>
    <experiments>4</experiments>
</comment>
<comment type="interaction">
    <interactant intactId="EBI-10981450">
        <id>Q14980-2</id>
    </interactant>
    <interactant intactId="EBI-7575403">
        <id>Q8VDU0</id>
        <label>Gpsm2</label>
    </interactant>
    <organismsDiffer>true</organismsDiffer>
    <experiments>2</experiments>
</comment>
<comment type="subcellular location">
    <subcellularLocation>
        <location evidence="12 22 32">Nucleus</location>
    </subcellularLocation>
    <subcellularLocation>
        <location evidence="5">Nucleus</location>
        <location evidence="5">Nucleoplasm</location>
    </subcellularLocation>
    <subcellularLocation>
        <location evidence="4 9 13 34">Nucleus matrix</location>
    </subcellularLocation>
    <subcellularLocation>
        <location evidence="12">Chromosome</location>
    </subcellularLocation>
    <subcellularLocation>
        <location evidence="9 11 30">Cytoplasm</location>
        <location evidence="9 11 30">Cytoskeleton</location>
    </subcellularLocation>
    <subcellularLocation>
        <location evidence="5 12 13 26 29 30">Cytoplasm</location>
        <location evidence="5 12 13 26 29 30">Cytoskeleton</location>
        <location evidence="5 12 13 26 29 30">Microtubule organizing center</location>
        <location evidence="5 12 13 26 29 30">Centrosome</location>
    </subcellularLocation>
    <subcellularLocation>
        <location evidence="5 8 9 11 12 13 14 18 19 21 22 23 25 26 27 28 29 32 33 34">Cytoplasm</location>
        <location evidence="5 8 9 11 12 13 14 18 19 21 22 23 25 26 27 28 29 32 33 34">Cytoskeleton</location>
        <location evidence="5 8 9 11 12 13 14 18 19 21 22 23 25 26 27 28 29 32 33 34">Spindle pole</location>
    </subcellularLocation>
    <subcellularLocation>
        <location evidence="18 19 21 22 23 25">Cytoplasm</location>
        <location evidence="18 19 21 22 23 25">Cell cortex</location>
    </subcellularLocation>
    <subcellularLocation>
        <location evidence="24 25">Cell membrane</location>
        <topology evidence="24 25">Lipid-anchor</topology>
        <orientation evidence="24 25">Cytoplasmic side</orientation>
    </subcellularLocation>
    <subcellularLocation>
        <location evidence="1">Lateral cell membrane</location>
    </subcellularLocation>
    <text evidence="1 5 8 11 12 13 14 18 19 21 22 23 24 25 27 28 29 30 32">Mitotic cell cycle-dependent shuttling protein that relocalizes from the interphase nucleus to the spindle poles and cell cortex (PubMed:10811826, PubMed:1541636). The localization to the spindle poles is regulated by AAAS (PubMed:26246606). In interphase, resides in the nuclear matrix (PubMed:1541630, PubMed:1541636, PubMed:23921553). In prophase, restricted to the interchromatin or condensed chromosome space (PubMed:10811826). In prometaphase, after nuclear envelope disassembly, forms aggregates both in the spindle midzone and at duplicated centrosomes and astral microtubules (MTs) of the bipolar spindle apparatus (PubMed:10811826). Translocates from the spindle midzone towards the spindle poles along spindle fibers in a MT- and dynein-dynactin-dependent manner until the anaphase onset (PubMed:10811826, PubMed:1541636). In metaphase, recruited to the polar cortical region in a GPSM2- and GNAI1-dependent manner (PubMed:23870127, PubMed:24109598, PubMed:24996901). Excluded from the metaphase equatorial cortical region in a RanGTP-dependent manner (PubMed:22327364, PubMed:23870127). Phosphorylation on Thr-2055 by CDK1 results in its localization at spindle poles in metaphase, but not at the cell cortex (PubMed:23921553). In anaphase, recruited and anchored at the cell membrane of the polar cortical region in a EPB41-, EPB41L2-, phosphatidylinositol-dependent and GPSM2- and G(i) alpha proteins-independent manner (PubMed:23870127, PubMed:24109598, PubMed:24371089, PubMed:24996901). Excluded from the anaphase equatorial region of the cell cortex in a RACGAP1- and KIF23-dependent and RanGTP-independent manner (PubMed:24996901). Associated with astral MTs emanating from the spindle poles during anaphase (PubMed:12445386, PubMed:24996901). Nonphosphorylated Thr-2055 localizes at the cell cortex, weakly during metaphase and more prominently during anaphase in a phosphatase PPP2CA-dependent manner (PubMed:23921553). As mitosis progresses it reassociates with telophase chromosomes very early during nuclear reformation, before substantial accumulation of lamins on chromosomal surfaces is evident (PubMed:1541636). Localizes to the tips of cortical MTs in prometaphase (PubMed:26765568). Localizes along MTs and specifically to both MT plus and minus ends (PubMed:26765568). Also accumulates at MT tips near the cell periphery (PubMed:26765568). Colocalizes with GPSM2 at mitotic spindle poles during mitosis (PubMed:11781568, PubMed:21816348). Colocalizes with SPAG5 at mitotic spindle at prometaphase and at mitotic spindle poles at metaphase and anaphase (PubMed:27462074). Colocalizes with ABRO1 at mitotic spindle poles (PubMed:26195665). Colocalized with TNKS from prophase through to anaphase in mitosis (PubMed:16076287). Colocalizes with tubulin alpha (PubMed:12445386). CCSAP is essential for its centrosomal localization (PubMed:26562023). In horizontally retinal progenitor dividing cells, localized to the lateral cortical region (By similarity).</text>
</comment>
<comment type="subcellular location">
    <molecule>Isoform 3</molecule>
    <subcellularLocation>
        <location evidence="34">Cytoplasm</location>
        <location evidence="34">Cytosol</location>
    </subcellularLocation>
    <subcellularLocation>
        <location evidence="34">Cytoplasm</location>
        <location evidence="34">Cytoskeleton</location>
        <location evidence="34">Microtubule organizing center</location>
        <location evidence="34">Centrosome</location>
    </subcellularLocation>
    <subcellularLocation>
        <location evidence="34">Cytoplasm</location>
        <location evidence="34">Cytoskeleton</location>
        <location evidence="34">Spindle pole</location>
    </subcellularLocation>
    <text evidence="34">During interphase, mainly clustered at the centrosomal region in the cytosol. After entry into mitosis, detected at mitotic spindle poles.</text>
</comment>
<comment type="subcellular location">
    <molecule>Isoform 4</molecule>
    <subcellularLocation>
        <location evidence="34">Cytoplasm</location>
        <location evidence="34">Cytosol</location>
    </subcellularLocation>
    <subcellularLocation>
        <location evidence="34">Cytoplasm</location>
        <location evidence="34">Cytoskeleton</location>
        <location evidence="34">Microtubule organizing center</location>
        <location evidence="34">Centrosome</location>
    </subcellularLocation>
    <subcellularLocation>
        <location evidence="34">Cytoplasm</location>
        <location evidence="34">Cytoskeleton</location>
        <location evidence="34">Spindle pole</location>
    </subcellularLocation>
    <text evidence="34">During interphase, mainly clustered at the centrosomal region in the cytosol. After entry into mitosis, detected at mitotic spindle poles.</text>
</comment>
<comment type="alternative products">
    <event type="alternative splicing"/>
    <isoform>
        <id>Q14980-1</id>
        <name>1</name>
        <name>Numa-1</name>
        <name>p230</name>
        <sequence type="displayed"/>
    </isoform>
    <isoform>
        <id>Q14980-2</id>
        <name>2</name>
        <sequence type="described" ref="VSP_012910"/>
    </isoform>
    <isoform>
        <id>Q14980-3</id>
        <name>3</name>
        <name evidence="39">Numa-m</name>
        <name>p195</name>
        <sequence type="described" ref="VSP_044378"/>
    </isoform>
    <isoform>
        <id>Q14980-4</id>
        <name>4</name>
        <name evidence="39">Numa-s</name>
        <name>p194</name>
        <sequence type="described" ref="VSP_044379"/>
    </isoform>
    <isoform>
        <id>Q14980-5</id>
        <name>5</name>
        <sequence type="described" ref="VSP_054146"/>
    </isoform>
</comment>
<comment type="domain">
    <text evidence="9 23">The C-terminal tubulin-binding domain mediates direct binding to microtubules, independently of dynein-dynactin complex, and induces their bundling and stabilization (PubMed:11956313). The 4.1-binding domain is necessary for its cortical stability and spindle orientation (PubMed:24109598).</text>
</comment>
<comment type="PTM">
    <text evidence="19 21 22 24 33">Phosphorylation and dephosphorylation on Thr-2055 regulates the extent of cortical NUMA1 and the dynein-dynactin complex localization during mitotic metaphase and anaphase (PubMed:23921553). In metaphase, phosphorylation on Thr-2055 occurs in a kinase CDK1-dependent manner; this phosphorylation maintains low levels of cortical dynein-dynactin complex at metaphase, and hence proper spindle positioning (PubMed:23921553, PubMed:24371089, PubMed:7769006). In anaphase, dephosphorylated on Thr-2055 by phosphatase PPP2CA; this dephosphorylation stimulates its membrane association and with the dynein-dynactin complex its enrichment at the cell cortex, and hence robust spindle elongation (PubMed:23921553, PubMed:24371089). Probably also phosphorylated on Thr-2015 and Ser-2087 by CDK1; these phosphorylations may regulate its cell cortex recruitment during metaphase and anaphase (PubMed:23870127). Phosphorylated on Thr-1047, Ser-1769, Ser-1772, Ser-1789 and Ser-1834 by PLK1; these phosphorylations induce cortical dynein-dynactin complex dissociation from the NUMA1-GPSM2 complex and negatively regulates cortical dynein-dynactin complex localization (PubMed:22327364).</text>
</comment>
<comment type="PTM">
    <text evidence="14">ADP-ribosylated by TNKS at the onset of mitosis; ADP-ribosylation is not required for its localization to spindle poles (PubMed:16076287).</text>
</comment>
<comment type="PTM">
    <text evidence="17">O-glycosylated during cytokinesis at sites identical or close to phosphorylation sites, this interferes with the phosphorylation status (PubMed:20068230).</text>
</comment>
<comment type="PTM">
    <text evidence="27">Ubiquitinated with 'Lys-63'-linked polyubiquitin chains. Deubiquitination by the BRISC complex is important for the incorporation of NUMA1 into mitotic spindle poles and normal spindle pole function, probably by modulating interactions between NUMA1, dynein-dynactin complex and importin-beta.</text>
</comment>
<comment type="miscellaneous">
    <text evidence="35">Also known as nuclear matrix protein-22/NMP-22/NMP22, an antigen used in diagnostic tests of bladder cancer.</text>
</comment>
<comment type="sequence caution" evidence="43">
    <conflict type="frameshift">
        <sequence resource="EMBL-CDS" id="CAA77670"/>
    </conflict>
</comment>
<comment type="online information" name="Atlas of Genetics and Cytogenetics in Oncology and Haematology">
    <link uri="https://atlasgeneticsoncology.org/gene/119/NUMA"/>
</comment>
<reference key="1">
    <citation type="journal article" date="1992" name="J. Cell Biol.">
        <title>NuMA: an unusually long coiled-coil related protein in the mammalian nucleus.</title>
        <authorList>
            <person name="Yang C.H."/>
            <person name="Lambie E.J."/>
            <person name="Snyder M."/>
        </authorList>
    </citation>
    <scope>NUCLEOTIDE SEQUENCE [MRNA] (ISOFORM 1)</scope>
    <scope>SUBCELLULAR LOCATION</scope>
</reference>
<reference key="2">
    <citation type="journal article" date="1992" name="J. Cell Biol.">
        <title>Primary structure of NuMA, an intranuclear protein that defines a novel pathway for segregation of proteins at mitosis.</title>
        <authorList>
            <person name="Compton D.A."/>
            <person name="Szilak I."/>
            <person name="Cleveland D.W."/>
        </authorList>
    </citation>
    <scope>NUCLEOTIDE SEQUENCE [MRNA] (ISOFORM 2)</scope>
    <scope>SUBCELLULAR LOCATION</scope>
</reference>
<reference key="3">
    <citation type="journal article" date="1993" name="J. Cell Sci.">
        <title>Primary structure and microtubule-interacting domain of the SP-H antigen: a mitotic map located at the spindle pole characterized as a homologous protein to NuMA.</title>
        <authorList>
            <person name="Maekawa T."/>
            <person name="Kuriyama R."/>
        </authorList>
    </citation>
    <scope>NUCLEOTIDE SEQUENCE [MRNA] (ISOFORM 1)</scope>
</reference>
<reference key="4">
    <citation type="journal article" date="2006" name="Nature">
        <title>Human chromosome 11 DNA sequence and analysis including novel gene identification.</title>
        <authorList>
            <person name="Taylor T.D."/>
            <person name="Noguchi H."/>
            <person name="Totoki Y."/>
            <person name="Toyoda A."/>
            <person name="Kuroki Y."/>
            <person name="Dewar K."/>
            <person name="Lloyd C."/>
            <person name="Itoh T."/>
            <person name="Takeda T."/>
            <person name="Kim D.-W."/>
            <person name="She X."/>
            <person name="Barlow K.F."/>
            <person name="Bloom T."/>
            <person name="Bruford E."/>
            <person name="Chang J.L."/>
            <person name="Cuomo C.A."/>
            <person name="Eichler E."/>
            <person name="FitzGerald M.G."/>
            <person name="Jaffe D.B."/>
            <person name="LaButti K."/>
            <person name="Nicol R."/>
            <person name="Park H.-S."/>
            <person name="Seaman C."/>
            <person name="Sougnez C."/>
            <person name="Yang X."/>
            <person name="Zimmer A.R."/>
            <person name="Zody M.C."/>
            <person name="Birren B.W."/>
            <person name="Nusbaum C."/>
            <person name="Fujiyama A."/>
            <person name="Hattori M."/>
            <person name="Rogers J."/>
            <person name="Lander E.S."/>
            <person name="Sakaki Y."/>
        </authorList>
    </citation>
    <scope>NUCLEOTIDE SEQUENCE [LARGE SCALE GENOMIC DNA]</scope>
</reference>
<reference key="5">
    <citation type="submission" date="2005-07" db="EMBL/GenBank/DDBJ databases">
        <authorList>
            <person name="Mural R.J."/>
            <person name="Istrail S."/>
            <person name="Sutton G."/>
            <person name="Florea L."/>
            <person name="Halpern A.L."/>
            <person name="Mobarry C.M."/>
            <person name="Lippert R."/>
            <person name="Walenz B."/>
            <person name="Shatkay H."/>
            <person name="Dew I."/>
            <person name="Miller J.R."/>
            <person name="Flanigan M.J."/>
            <person name="Edwards N.J."/>
            <person name="Bolanos R."/>
            <person name="Fasulo D."/>
            <person name="Halldorsson B.V."/>
            <person name="Hannenhalli S."/>
            <person name="Turner R."/>
            <person name="Yooseph S."/>
            <person name="Lu F."/>
            <person name="Nusskern D.R."/>
            <person name="Shue B.C."/>
            <person name="Zheng X.H."/>
            <person name="Zhong F."/>
            <person name="Delcher A.L."/>
            <person name="Huson D.H."/>
            <person name="Kravitz S.A."/>
            <person name="Mouchard L."/>
            <person name="Reinert K."/>
            <person name="Remington K.A."/>
            <person name="Clark A.G."/>
            <person name="Waterman M.S."/>
            <person name="Eichler E.E."/>
            <person name="Adams M.D."/>
            <person name="Hunkapiller M.W."/>
            <person name="Myers E.W."/>
            <person name="Venter J.C."/>
        </authorList>
    </citation>
    <scope>NUCLEOTIDE SEQUENCE [LARGE SCALE GENOMIC DNA]</scope>
</reference>
<reference key="6">
    <citation type="journal article" date="2004" name="Genome Res.">
        <title>The status, quality, and expansion of the NIH full-length cDNA project: the Mammalian Gene Collection (MGC).</title>
        <authorList>
            <consortium name="The MGC Project Team"/>
        </authorList>
    </citation>
    <scope>NUCLEOTIDE SEQUENCE [LARGE SCALE MRNA] (ISOFORM 5)</scope>
    <source>
        <tissue>Lung</tissue>
    </source>
</reference>
<reference key="7">
    <citation type="journal article" date="1993" name="J. Cell Sci.">
        <title>Nuclear proteins of the bovine esophageal epithelium. II. The NuMA gene gives rise to multiple mRNAs and gene products reactive with monoclonal antibody W1.</title>
        <authorList>
            <person name="Tang T.K."/>
            <person name="Tang C.J."/>
            <person name="Chen Y.L."/>
            <person name="Wu C.W."/>
        </authorList>
    </citation>
    <scope>NUCLEOTIDE SEQUENCE [MRNA] OF 1576-2115 (ISOFORM 1)</scope>
    <scope>NUCLEOTIDE SEQUENCE [MRNA] OF 975-1776 (ISOFORM 3)</scope>
    <scope>NUCLEOTIDE SEQUENCE [MRNA] OF 610-1763 (ISOFORM 4)</scope>
    <scope>ALTERNATIVE SPLICING</scope>
</reference>
<reference key="8">
    <citation type="journal article" date="1994" name="J. Cell Sci.">
        <title>Nuclear mitotic apparatus protein (NuMA): spindle association, nuclear targeting and differential subcellular localization of various NuMA isoforms.</title>
        <authorList>
            <person name="Tang T.K."/>
            <person name="Tang C.J."/>
            <person name="Chao Y.J."/>
            <person name="Wu C.W."/>
        </authorList>
    </citation>
    <scope>SUBCELLULAR LOCATION (ISOFORMS 3 AND 4)</scope>
    <scope>ALTERNATIVE SPLICING (ISOFORMS 3 AND 4)</scope>
    <scope>MUTAGENESIS OF ARG-1984 AND LYS-1988</scope>
    <scope>NUCLEAR LOCALIZATION SIGNAL</scope>
</reference>
<reference key="9">
    <citation type="journal article" date="1995" name="J. Cell Sci.">
        <title>Mutation of the predicted p34cdc2 phosphorylation sites in NuMA impair the assembly of the mitotic spindle and block mitosis.</title>
        <authorList>
            <person name="Compton D.A."/>
            <person name="Luo C."/>
        </authorList>
    </citation>
    <scope>FUNCTION</scope>
    <scope>SUBCELLULAR LOCATION</scope>
    <scope>PHOSPHORYLATION AT THR-2015; THR-2055; SER-2087 AND THR-2106</scope>
    <scope>MUTAGENESIS OF THR-2015; THR-2055; SER-2087 AND THR-2106</scope>
</reference>
<reference key="10">
    <citation type="journal article" date="1998" name="Urology">
        <title>Sensitivity and specificity of NMP-22, telomerase, and BTA in the detection of human bladder cancer.</title>
        <authorList>
            <person name="Landman J."/>
            <person name="Chang Y."/>
            <person name="Kavaler E."/>
            <person name="Droller M.J."/>
            <person name="Liu B.C."/>
        </authorList>
    </citation>
    <scope>USE IN DIAGNOSTIC TESTS</scope>
</reference>
<reference key="11">
    <citation type="journal article" date="2000" name="J. Cell Biol.">
        <title>Formation of spindle poles by dynein/dynactin-dependent transport of NuMA.</title>
        <authorList>
            <person name="Merdes A."/>
            <person name="Heald R."/>
            <person name="Samejima K."/>
            <person name="Earnshaw W.C."/>
            <person name="Cleveland D.W."/>
        </authorList>
    </citation>
    <scope>SUBCELLULAR LOCATION</scope>
    <scope>ASSOCIATION WITH THE DYNEIN-DYNACTIN COMPLEX</scope>
</reference>
<reference key="12">
    <citation type="journal article" date="2001" name="Cell">
        <title>Importin beta is a mitotic target of the small GTPase Ran in spindle assembly.</title>
        <authorList>
            <person name="Nachury M.V."/>
            <person name="Maresca T.J."/>
            <person name="Salmon W.C."/>
            <person name="Waterman-Storer C.M."/>
            <person name="Heald R."/>
            <person name="Weis K."/>
        </authorList>
    </citation>
    <scope>FUNCTION</scope>
    <scope>INTERACTION WITH THE IMPORTIN ALPHA/IMPORTIN BETA RECEPTOR</scope>
</reference>
<reference key="13">
    <citation type="journal article" date="2001" name="Nat. Cell Biol.">
        <title>A mammalian partner of inscuteable binds NuMA and regulates mitotic spindle organization.</title>
        <authorList>
            <person name="Du Q."/>
            <person name="Stukenberg P.T."/>
            <person name="Macara I.G."/>
        </authorList>
    </citation>
    <scope>INTERACTION WITH GPSM2</scope>
    <scope>SUBCELLULAR LOCATION</scope>
</reference>
<reference key="14">
    <citation type="journal article" date="2001" name="Science">
        <title>Role of importin-beta in coupling Ran to downstream targets in microtubule assembly.</title>
        <authorList>
            <person name="Wiese C."/>
            <person name="Wilde A."/>
            <person name="Moore M.S."/>
            <person name="Adam S.A."/>
            <person name="Merdes A."/>
            <person name="Zheng Y."/>
        </authorList>
    </citation>
    <scope>FUNCTION</scope>
    <scope>INTERACTION WITH KPNB1</scope>
</reference>
<reference key="15">
    <citation type="journal article" date="2002" name="Curr. Biol.">
        <title>LGN blocks the ability of NuMA to bind and stabilize microtubules. A mechanism for mitotic spindle assembly regulation.</title>
        <authorList>
            <person name="Du Q."/>
            <person name="Taylor L."/>
            <person name="Compton D.A."/>
            <person name="Macara I.G."/>
        </authorList>
    </citation>
    <scope>FUNCTION</scope>
    <scope>INTERACTION WITH GPSM2 AND MICROTUBULES</scope>
    <scope>SUBCELLULAR LOCATION</scope>
    <scope>DOMAINS</scope>
</reference>
<reference key="16">
    <citation type="journal article" date="2002" name="J. Biol. Chem.">
        <title>Identification of a tankyrase-binding motif shared by IRAP, TAB182, and human TRF1 but not mouse TRF1. NuMA contains this RXXPDG motif and is a novel tankyrase partner.</title>
        <authorList>
            <person name="Sbodio J.I."/>
            <person name="Chi N.W."/>
        </authorList>
    </citation>
    <scope>INTERACTION WITH TNKS AND TNKS2</scope>
</reference>
<reference key="17">
    <citation type="journal article" date="2002" name="J. Cell Sci.">
        <title>Direct binding of NuMA to tubulin is mediated by a novel sequence motif in the tail domain that bundles and stabilizes microtubules.</title>
        <authorList>
            <person name="Haren L."/>
            <person name="Merdes A."/>
        </authorList>
    </citation>
    <scope>FUNCTION</scope>
    <scope>SUBCELLULAR LOCATION</scope>
    <scope>INTERACTION WITH TUBULIN AND MICROTUBULES</scope>
    <scope>TUBULIN-BINDING DOMAIN</scope>
</reference>
<reference key="18">
    <citation type="journal article" date="2005" name="Biochem. J.">
        <title>NuMA is a major acceptor of poly(ADP-ribosyl)ation by tankyrase 1 in mitosis.</title>
        <authorList>
            <person name="Chang W."/>
            <person name="Dynek J.N."/>
            <person name="Smith S."/>
        </authorList>
    </citation>
    <scope>FUNCTION</scope>
    <scope>ADP-RIBOSYLATION</scope>
    <scope>INTERACTION WITH TNKS</scope>
    <scope>SUBCELLULAR LOCATION</scope>
</reference>
<reference key="19">
    <citation type="journal article" date="2005" name="Nat. Biotechnol.">
        <title>Immunoaffinity profiling of tyrosine phosphorylation in cancer cells.</title>
        <authorList>
            <person name="Rush J."/>
            <person name="Moritz A."/>
            <person name="Lee K.A."/>
            <person name="Guo A."/>
            <person name="Goss V.L."/>
            <person name="Spek E.J."/>
            <person name="Zhang H."/>
            <person name="Zha X.-M."/>
            <person name="Polakiewicz R.D."/>
            <person name="Comb M.J."/>
        </authorList>
    </citation>
    <scope>IDENTIFICATION BY MASS SPECTROMETRY [LARGE SCALE ANALYSIS]</scope>
</reference>
<reference key="20">
    <citation type="journal article" date="2006" name="Cell">
        <title>Global, in vivo, and site-specific phosphorylation dynamics in signaling networks.</title>
        <authorList>
            <person name="Olsen J.V."/>
            <person name="Blagoev B."/>
            <person name="Gnad F."/>
            <person name="Macek B."/>
            <person name="Kumar C."/>
            <person name="Mortensen P."/>
            <person name="Mann M."/>
        </authorList>
    </citation>
    <scope>PHOSPHORYLATION [LARGE SCALE ANALYSIS] AT SER-1757</scope>
    <scope>IDENTIFICATION BY MASS SPECTROMETRY [LARGE SCALE ANALYSIS]</scope>
    <source>
        <tissue>Cervix carcinoma</tissue>
    </source>
</reference>
<reference key="21">
    <citation type="journal article" date="2006" name="Nat. Biotechnol.">
        <title>A probability-based approach for high-throughput protein phosphorylation analysis and site localization.</title>
        <authorList>
            <person name="Beausoleil S.A."/>
            <person name="Villen J."/>
            <person name="Gerber S.A."/>
            <person name="Rush J."/>
            <person name="Gygi S.P."/>
        </authorList>
    </citation>
    <scope>PHOSPHORYLATION [LARGE SCALE ANALYSIS] AT SER-1757; SER-1769; THR-1776; SER-1840 AND THR-2106</scope>
    <scope>IDENTIFICATION BY MASS SPECTROMETRY [LARGE SCALE ANALYSIS]</scope>
    <source>
        <tissue>Cervix carcinoma</tissue>
    </source>
</reference>
<reference key="22">
    <citation type="journal article" date="2006" name="Proc. Natl. Acad. Sci. U.S.A.">
        <title>Rae1 interaction with NuMA is required for bipolar spindle formation.</title>
        <authorList>
            <person name="Wong R.W."/>
            <person name="Blobel G."/>
            <person name="Coutavas E."/>
        </authorList>
    </citation>
    <scope>FUNCTION</scope>
    <scope>INTERACTION WITH DYNEIN-DYNACTIN COMPLEX AND RAE1</scope>
</reference>
<reference key="23">
    <citation type="journal article" date="2007" name="J. Proteome Res.">
        <title>Improved titanium dioxide enrichment of phosphopeptides from HeLa cells and high confident phosphopeptide identification by cross-validation of MS/MS and MS/MS/MS spectra.</title>
        <authorList>
            <person name="Yu L.R."/>
            <person name="Zhu Z."/>
            <person name="Chan K.C."/>
            <person name="Issaq H.J."/>
            <person name="Dimitrov D.S."/>
            <person name="Veenstra T.D."/>
        </authorList>
    </citation>
    <scope>PHOSPHORYLATION [LARGE SCALE ANALYSIS] AT SER-2077</scope>
    <scope>IDENTIFICATION BY MASS SPECTROMETRY [LARGE SCALE ANALYSIS]</scope>
    <source>
        <tissue>Cervix carcinoma</tissue>
    </source>
</reference>
<reference key="24">
    <citation type="journal article" date="2007" name="Science">
        <title>ATM and ATR substrate analysis reveals extensive protein networks responsive to DNA damage.</title>
        <authorList>
            <person name="Matsuoka S."/>
            <person name="Ballif B.A."/>
            <person name="Smogorzewska A."/>
            <person name="McDonald E.R. III"/>
            <person name="Hurov K.E."/>
            <person name="Luo J."/>
            <person name="Bakalarski C.E."/>
            <person name="Zhao Z."/>
            <person name="Solimini N."/>
            <person name="Lerenthal Y."/>
            <person name="Shiloh Y."/>
            <person name="Gygi S.P."/>
            <person name="Elledge S.J."/>
        </authorList>
    </citation>
    <scope>PHOSPHORYLATION [LARGE SCALE ANALYSIS] AT SER-388; SER-395; SER-820; SER-1601; SER-1757 AND SER-1760</scope>
    <scope>IDENTIFICATION BY MASS SPECTROMETRY [LARGE SCALE ANALYSIS]</scope>
    <source>
        <tissue>Embryonic kidney</tissue>
    </source>
</reference>
<reference key="25">
    <citation type="journal article" date="2008" name="J. Proteome Res.">
        <title>Combining protein-based IMAC, peptide-based IMAC, and MudPIT for efficient phosphoproteomic analysis.</title>
        <authorList>
            <person name="Cantin G.T."/>
            <person name="Yi W."/>
            <person name="Lu B."/>
            <person name="Park S.K."/>
            <person name="Xu T."/>
            <person name="Lee J.-D."/>
            <person name="Yates J.R. III"/>
        </authorList>
    </citation>
    <scope>PHOSPHORYLATION [LARGE SCALE ANALYSIS] AT SER-1757</scope>
    <scope>IDENTIFICATION BY MASS SPECTROMETRY [LARGE SCALE ANALYSIS]</scope>
    <source>
        <tissue>Cervix carcinoma</tissue>
    </source>
</reference>
<reference key="26">
    <citation type="journal article" date="2008" name="J. Proteome Res.">
        <title>Phosphorylation analysis of primary human T lymphocytes using sequential IMAC and titanium oxide enrichment.</title>
        <authorList>
            <person name="Carrascal M."/>
            <person name="Ovelleiro D."/>
            <person name="Casas V."/>
            <person name="Gay M."/>
            <person name="Abian J."/>
        </authorList>
    </citation>
    <scope>PHOSPHORYLATION [LARGE SCALE ANALYSIS] AT SER-1757</scope>
    <scope>IDENTIFICATION BY MASS SPECTROMETRY [LARGE SCALE ANALYSIS]</scope>
    <source>
        <tissue>T-cell</tissue>
    </source>
</reference>
<reference key="27">
    <citation type="journal article" date="2008" name="Proc. Natl. Acad. Sci. U.S.A.">
        <title>A quantitative atlas of mitotic phosphorylation.</title>
        <authorList>
            <person name="Dephoure N."/>
            <person name="Zhou C."/>
            <person name="Villen J."/>
            <person name="Beausoleil S.A."/>
            <person name="Bakalarski C.E."/>
            <person name="Elledge S.J."/>
            <person name="Gygi S.P."/>
        </authorList>
    </citation>
    <scope>PHOSPHORYLATION [LARGE SCALE ANALYSIS] AT SER-169; SER-203; THR-211; SER-1721; SER-1724; SER-1728; SER-1757; SER-1769; SER-1772; TYR-1774; THR-1776; SER-1788; SER-1789; SER-1792; SER-1800; THR-1804; SER-1830; SER-1833; SER-1834; TYR-1836; SER-1840; SER-1862; SER-1887; SER-1969; SER-1991 AND THR-2000</scope>
    <scope>IDENTIFICATION BY MASS SPECTROMETRY [LARGE SCALE ANALYSIS]</scope>
    <source>
        <tissue>Cervix carcinoma</tissue>
    </source>
</reference>
<reference key="28">
    <citation type="journal article" date="2009" name="Anal. Chem.">
        <title>Lys-N and trypsin cover complementary parts of the phosphoproteome in a refined SCX-based approach.</title>
        <authorList>
            <person name="Gauci S."/>
            <person name="Helbig A.O."/>
            <person name="Slijper M."/>
            <person name="Krijgsveld J."/>
            <person name="Heck A.J."/>
            <person name="Mohammed S."/>
        </authorList>
    </citation>
    <scope>IDENTIFICATION BY MASS SPECTROMETRY [LARGE SCALE ANALYSIS]</scope>
</reference>
<reference key="29">
    <citation type="journal article" date="2009" name="J. Cell Biol.">
        <title>Requirements for NuMA in maintenance and establishment of mammalian spindle poles.</title>
        <authorList>
            <person name="Silk A.D."/>
            <person name="Holland A.J."/>
            <person name="Cleveland D.W."/>
        </authorList>
    </citation>
    <scope>FUNCTION</scope>
</reference>
<reference key="30">
    <citation type="journal article" date="2009" name="Sci. Signal.">
        <title>Quantitative phosphoproteomic analysis of T cell receptor signaling reveals system-wide modulation of protein-protein interactions.</title>
        <authorList>
            <person name="Mayya V."/>
            <person name="Lundgren D.H."/>
            <person name="Hwang S.-I."/>
            <person name="Rezaul K."/>
            <person name="Wu L."/>
            <person name="Eng J.K."/>
            <person name="Rodionov V."/>
            <person name="Han D.K."/>
        </authorList>
    </citation>
    <scope>PHOSPHORYLATION [LARGE SCALE ANALYSIS] AT SER-203; SER-1225; SER-1757; SER-1769; THR-1776; SER-1788 AND SER-1800</scope>
    <scope>IDENTIFICATION BY MASS SPECTROMETRY [LARGE SCALE ANALYSIS]</scope>
    <source>
        <tissue>Leukemic T-cell</tissue>
    </source>
</reference>
<reference key="31">
    <citation type="journal article" date="2009" name="Science">
        <title>Lysine acetylation targets protein complexes and co-regulates major cellular functions.</title>
        <authorList>
            <person name="Choudhary C."/>
            <person name="Kumar C."/>
            <person name="Gnad F."/>
            <person name="Nielsen M.L."/>
            <person name="Rehman M."/>
            <person name="Walther T.C."/>
            <person name="Olsen J.V."/>
            <person name="Mann M."/>
        </authorList>
    </citation>
    <scope>ACETYLATION [LARGE SCALE ANALYSIS] AT LYS-379; LYS-891 AND LYS-1511</scope>
    <scope>IDENTIFICATION BY MASS SPECTROMETRY [LARGE SCALE ANALYSIS]</scope>
</reference>
<reference key="32">
    <citation type="journal article" date="2010" name="Sci. Signal.">
        <title>Extensive crosstalk between O-GlcNAcylation and phosphorylation regulates cytokinesis.</title>
        <authorList>
            <person name="Wang Z."/>
            <person name="Udeshi N.D."/>
            <person name="Slawson C."/>
            <person name="Compton P.D."/>
            <person name="Sakabe K."/>
            <person name="Cheung W.D."/>
            <person name="Shabanowitz J."/>
            <person name="Hunt D.F."/>
            <person name="Hart G.W."/>
        </authorList>
    </citation>
    <scope>GLYCOSYLATION AT SER-1844</scope>
</reference>
<reference key="33">
    <citation type="journal article" date="2010" name="Sci. Signal.">
        <title>Quantitative phosphoproteomics reveals widespread full phosphorylation site occupancy during mitosis.</title>
        <authorList>
            <person name="Olsen J.V."/>
            <person name="Vermeulen M."/>
            <person name="Santamaria A."/>
            <person name="Kumar C."/>
            <person name="Miller M.L."/>
            <person name="Jensen L.J."/>
            <person name="Gnad F."/>
            <person name="Cox J."/>
            <person name="Jensen T.S."/>
            <person name="Nigg E.A."/>
            <person name="Brunak S."/>
            <person name="Mann M."/>
        </authorList>
    </citation>
    <scope>PHOSPHORYLATION [LARGE SCALE ANALYSIS] AT SER-169; SER-203; THR-211; SER-271; SER-1187; SER-1225; SER-1757; SER-1769; SER-1830; SER-1862; SER-1969; SER-1991; THR-2000 AND SER-2003</scope>
    <scope>IDENTIFICATION BY MASS SPECTROMETRY [LARGE SCALE ANALYSIS]</scope>
    <source>
        <tissue>Cervix carcinoma</tissue>
    </source>
</reference>
<reference key="34">
    <citation type="journal article" date="2010" name="Trends Cell Biol.">
        <title>NuMA after 30 years: the matrix revisited.</title>
        <authorList>
            <person name="Radulescu A.E."/>
            <person name="Cleveland D.W."/>
        </authorList>
    </citation>
    <scope>REVIEW</scope>
</reference>
<reference key="35">
    <citation type="journal article" date="2011" name="BMC Syst. Biol.">
        <title>Initial characterization of the human central proteome.</title>
        <authorList>
            <person name="Burkard T.R."/>
            <person name="Planyavsky M."/>
            <person name="Kaupe I."/>
            <person name="Breitwieser F.P."/>
            <person name="Buerckstuemmer T."/>
            <person name="Bennett K.L."/>
            <person name="Superti-Furga G."/>
            <person name="Colinge J."/>
        </authorList>
    </citation>
    <scope>IDENTIFICATION BY MASS SPECTROMETRY [LARGE SCALE ANALYSIS]</scope>
</reference>
<reference key="36">
    <citation type="journal article" date="2011" name="Sci. Signal.">
        <title>System-wide temporal characterization of the proteome and phosphoproteome of human embryonic stem cell differentiation.</title>
        <authorList>
            <person name="Rigbolt K.T."/>
            <person name="Prokhorova T.A."/>
            <person name="Akimov V."/>
            <person name="Henningsen J."/>
            <person name="Johansen P.T."/>
            <person name="Kratchmarova I."/>
            <person name="Kassem M."/>
            <person name="Mann M."/>
            <person name="Olsen J.V."/>
            <person name="Blagoev B."/>
        </authorList>
    </citation>
    <scope>PHOSPHORYLATION [LARGE SCALE ANALYSIS] AT SER-1757</scope>
    <scope>IDENTIFICATION BY MASS SPECTROMETRY [LARGE SCALE ANALYSIS]</scope>
</reference>
<reference key="37">
    <citation type="journal article" date="2012" name="J. Cell Biol.">
        <title>Cortical dynein is critical for proper spindle positioning in human cells.</title>
        <authorList>
            <person name="Kotak S."/>
            <person name="Busso C."/>
            <person name="Goenczy P."/>
        </authorList>
    </citation>
    <scope>FUNCTION</scope>
    <scope>INTERACTION WITH DYNEIN-DYNACTIN COMPLEX</scope>
</reference>
<reference key="38">
    <citation type="journal article" date="2012" name="Nat. Cell Biol.">
        <title>Chromosome- and spindle-pole-derived signals generate an intrinsic code for spindle position and orientation.</title>
        <authorList>
            <person name="Kiyomitsu T."/>
            <person name="Cheeseman I.M."/>
        </authorList>
    </citation>
    <scope>FUNCTION</scope>
    <scope>INTERACTION WITH GPSM2</scope>
    <scope>SUBCELLULAR LOCATION</scope>
    <scope>PHOSPHORYLATION AT THR-1047; SER-1769; SER-1772; SER-1789 AND SER-1834 BY PLK1</scope>
    <scope>IDENTIFICATION BY MASS SPECTROMETRY</scope>
</reference>
<reference key="39">
    <citation type="journal article" date="2012" name="Proc. Natl. Acad. Sci. U.S.A.">
        <title>N-terminal acetylome analyses and functional insights of the N-terminal acetyltransferase NatB.</title>
        <authorList>
            <person name="Van Damme P."/>
            <person name="Lasa M."/>
            <person name="Polevoda B."/>
            <person name="Gazquez C."/>
            <person name="Elosegui-Artola A."/>
            <person name="Kim D.S."/>
            <person name="De Juan-Pardo E."/>
            <person name="Demeyer K."/>
            <person name="Hole K."/>
            <person name="Larrea E."/>
            <person name="Timmerman E."/>
            <person name="Prieto J."/>
            <person name="Arnesen T."/>
            <person name="Sherman F."/>
            <person name="Gevaert K."/>
            <person name="Aldabe R."/>
        </authorList>
    </citation>
    <scope>IDENTIFICATION BY MASS SPECTROMETRY [LARGE SCALE ANALYSIS]</scope>
</reference>
<reference key="40">
    <citation type="journal article" date="2013" name="Cell">
        <title>Cortical dynein and asymmetric membrane elongation coordinately position the spindle in anaphase.</title>
        <authorList>
            <person name="Kiyomitsu T."/>
            <person name="Cheeseman I.M."/>
        </authorList>
    </citation>
    <scope>FUNCTION</scope>
    <scope>SUBCELLULAR LOCATION</scope>
    <scope>INTERACTION WITH EPB41 AND EPB41L2</scope>
    <scope>PROBABLE PHOSPHORYLATION AT THR-2015; THR-2055 AND SER-2087 BY CDK1</scope>
    <scope>MUTAGENESIS OF THR-2015; THR-2055 AND SER-2087</scope>
</reference>
<reference key="41">
    <citation type="journal article" date="2013" name="EMBO J.">
        <title>NuMA phosphorylation by CDK1 couples mitotic progression with cortical dynein function.</title>
        <authorList>
            <person name="Kotak S."/>
            <person name="Busso C."/>
            <person name="Goenczy P."/>
        </authorList>
    </citation>
    <scope>FUNCTION</scope>
    <scope>PHOSPHORYLATION AT THR-2015; THR-2055; SER-2087 AND THR-2106</scope>
    <scope>SUBCELLULAR LOCATION</scope>
    <scope>IDENTIFICATION BY MASS SPECTROMETRY</scope>
    <scope>MUTAGENESIS OF THR-2055</scope>
</reference>
<reference key="42">
    <citation type="journal article" date="2013" name="J. Proteome Res.">
        <title>Toward a comprehensive characterization of a human cancer cell phosphoproteome.</title>
        <authorList>
            <person name="Zhou H."/>
            <person name="Di Palma S."/>
            <person name="Preisinger C."/>
            <person name="Peng M."/>
            <person name="Polat A.N."/>
            <person name="Heck A.J."/>
            <person name="Mohammed S."/>
        </authorList>
    </citation>
    <scope>PHOSPHORYLATION [LARGE SCALE ANALYSIS] AT SER-169; SER-271; SER-1757; SER-1769; SER-1830; SER-1834; SER-1840; SER-1844; SER-1862; SER-1887; SER-1969; SER-1991; THR-2000; SER-2047; THR-2055 AND SER-2062</scope>
    <scope>IDENTIFICATION BY MASS SPECTROMETRY [LARGE SCALE ANALYSIS]</scope>
    <source>
        <tissue>Cervix carcinoma</tissue>
        <tissue>Erythroleukemia</tissue>
    </source>
</reference>
<reference key="43">
    <citation type="journal article" date="2013" name="Mol. Biol. Cell">
        <title>NuMA localization, stability, and function in spindle orientation involve 4.1 and Cdk1 interactions.</title>
        <authorList>
            <person name="Seldin L."/>
            <person name="Poulson N.D."/>
            <person name="Foote H.P."/>
            <person name="Lechler T."/>
        </authorList>
    </citation>
    <scope>FUNCTION</scope>
    <scope>INTERACTION WITH GPSM2</scope>
    <scope>SUBCELLULAR LOCATION</scope>
    <scope>DOMAIN</scope>
    <scope>MUTAGENESIS OF THR-2055</scope>
</reference>
<reference key="44">
    <citation type="journal article" date="2014" name="EMBO J.">
        <title>NuMA interacts with phosphoinositides and links the mitotic spindle with the plasma membrane.</title>
        <authorList>
            <person name="Kotak S."/>
            <person name="Busso C."/>
            <person name="Goenczy P."/>
        </authorList>
    </citation>
    <scope>FUNCTION</scope>
    <scope>INTERACTION WITH EPB41 AND EPB41L2</scope>
    <scope>PHOSPHATIDYLINOSITOL-BINDING</scope>
    <scope>SUBCELLULAR LOCATION</scope>
    <scope>MUTAGENESIS OF THR-2055</scope>
</reference>
<reference key="45">
    <citation type="journal article" date="2014" name="J. Proteomics">
        <title>An enzyme assisted RP-RPLC approach for in-depth analysis of human liver phosphoproteome.</title>
        <authorList>
            <person name="Bian Y."/>
            <person name="Song C."/>
            <person name="Cheng K."/>
            <person name="Dong M."/>
            <person name="Wang F."/>
            <person name="Huang J."/>
            <person name="Sun D."/>
            <person name="Wang L."/>
            <person name="Ye M."/>
            <person name="Zou H."/>
        </authorList>
    </citation>
    <scope>PHOSPHORYLATION [LARGE SCALE ANALYSIS] AT SER-162; THR-163; SER-169; SER-271; SER-1225; SER-1757 AND SER-1788</scope>
    <scope>IDENTIFICATION BY MASS SPECTROMETRY [LARGE SCALE ANALYSIS]</scope>
    <source>
        <tissue>Liver</tissue>
    </source>
</reference>
<reference key="46">
    <citation type="journal article" date="2014" name="Mol. Biol. Cell">
        <title>Cell cycle-regulated membrane binding of NuMA contributes to efficient anaphase chromosome separation.</title>
        <authorList>
            <person name="Zheng Z."/>
            <person name="Wan Q."/>
            <person name="Meixiong G."/>
            <person name="Du Q."/>
        </authorList>
    </citation>
    <scope>FUNCTION</scope>
    <scope>SUBCELLULAR LOCATION</scope>
    <scope>PHOSPHORYLATION AT THR-2055</scope>
    <scope>DOMAIN</scope>
    <scope>PHOSPHATIDYLINOSITOL-BINDING</scope>
    <scope>MUTAGENESIS OF THR-2055</scope>
</reference>
<reference key="47">
    <citation type="journal article" date="2014" name="Nat. Struct. Mol. Biol.">
        <title>Uncovering global SUMOylation signaling networks in a site-specific manner.</title>
        <authorList>
            <person name="Hendriks I.A."/>
            <person name="D'Souza R.C."/>
            <person name="Yang B."/>
            <person name="Verlaan-de Vries M."/>
            <person name="Mann M."/>
            <person name="Vertegaal A.C."/>
        </authorList>
    </citation>
    <scope>SUMOYLATION [LARGE SCALE ANALYSIS] AT LYS-1766</scope>
    <scope>IDENTIFICATION BY MASS SPECTROMETRY [LARGE SCALE ANALYSIS]</scope>
</reference>
<reference key="48">
    <citation type="journal article" date="2014" name="Proc. Natl. Acad. Sci. U.S.A.">
        <title>Mapping of SUMO sites and analysis of SUMOylation changes induced by external stimuli.</title>
        <authorList>
            <person name="Impens F."/>
            <person name="Radoshevich L."/>
            <person name="Cossart P."/>
            <person name="Ribet D."/>
        </authorList>
    </citation>
    <scope>SUMOYLATION [LARGE SCALE ANALYSIS] AT LYS-1766</scope>
    <scope>IDENTIFICATION BY MASS SPECTROMETRY [LARGE SCALE ANALYSIS]</scope>
</reference>
<reference key="49">
    <citation type="journal article" date="2015" name="Cell Rep.">
        <title>SUMO-2 orchestrates chromatin modifiers in response to DNA damage.</title>
        <authorList>
            <person name="Hendriks I.A."/>
            <person name="Treffers L.W."/>
            <person name="Verlaan-de Vries M."/>
            <person name="Olsen J.V."/>
            <person name="Vertegaal A.C."/>
        </authorList>
    </citation>
    <scope>SUMOYLATION [LARGE SCALE ANALYSIS] AT LYS-1766</scope>
    <scope>IDENTIFICATION BY MASS SPECTROMETRY [LARGE SCALE ANALYSIS]</scope>
</reference>
<reference key="50">
    <citation type="journal article" date="2015" name="J. Cell Biol.">
        <title>The deubiquitinating enzyme complex BRISC is required for proper mitotic spindle assembly in mammalian cells.</title>
        <authorList>
            <person name="Yan K."/>
            <person name="Li L."/>
            <person name="Wang X."/>
            <person name="Hong R."/>
            <person name="Zhang Y."/>
            <person name="Yang H."/>
            <person name="Lin M."/>
            <person name="Zhang S."/>
            <person name="He Q."/>
            <person name="Zheng D."/>
            <person name="Tang J."/>
            <person name="Yin Y."/>
            <person name="Shao G."/>
        </authorList>
    </citation>
    <scope>FUNCTION</scope>
    <scope>SUBUNIT</scope>
    <scope>UBIQUITINATION</scope>
    <scope>INTERACTION WITH ABRAXAS2; KPNB1 AND DYNEIN-DYNACTIN COMPLEX</scope>
    <scope>IDENTIFICATION BY MASS SPECTROMETRY</scope>
    <scope>SUBCELLULAR LOCATION</scope>
</reference>
<reference key="51">
    <citation type="journal article" date="2015" name="Mol. Biol. Cell">
        <title>CENP-32 is required to maintain centrosomal dominance in bipolar spindle assembly.</title>
        <authorList>
            <person name="Ohta S."/>
            <person name="Wood L."/>
            <person name="Toramoto I."/>
            <person name="Yagyu K."/>
            <person name="Fukagawa T."/>
            <person name="Earnshaw W.C."/>
        </authorList>
    </citation>
    <scope>FUNCTION</scope>
    <scope>SUBCELLULAR LOCATION</scope>
</reference>
<reference key="52">
    <citation type="journal article" date="2015" name="PLoS ONE">
        <title>Polyglutamylated tubulin binding protein C1orf96/CSAP is involved in microtubule stabilization in mitotic spindles.</title>
        <authorList>
            <person name="Ohta S."/>
            <person name="Hamada M."/>
            <person name="Sato N."/>
            <person name="Toramoto I."/>
        </authorList>
    </citation>
    <scope>SUBCELLULAR LOCATION</scope>
</reference>
<reference key="53">
    <citation type="journal article" date="2016" name="Dev. Cell">
        <title>SAPCD2 controls spindle orientation and asymmetric divisions by negatively regulating the Galphai-LGN-NuMA ternary complex.</title>
        <authorList>
            <person name="Chiu C.W."/>
            <person name="Monat C."/>
            <person name="Robitaille M."/>
            <person name="Lacomme M."/>
            <person name="Daulat A.M."/>
            <person name="Macleod G."/>
            <person name="McNeill H."/>
            <person name="Cayouette M."/>
            <person name="Angers S."/>
        </authorList>
    </citation>
    <scope>IDENTIFICATION IN A SPINDLE ORIENTATION COMPLEX</scope>
</reference>
<reference key="54">
    <citation type="journal article" date="2016" name="Elife">
        <title>NuMA-microtubule interactions are critical for spindle orientation and the morphogenesis of diverse epidermal structures.</title>
        <authorList>
            <person name="Seldin L."/>
            <person name="Muroyama A."/>
            <person name="Lechler T."/>
        </authorList>
    </citation>
    <scope>FUNCTION</scope>
    <scope>INTERACTION WITH MICROTUBULES</scope>
    <scope>SUBCELLULAR LOCATION</scope>
    <scope>DOMAIN</scope>
    <scope>NUCLEAR LOCALIZATION SIGNAL</scope>
</reference>
<reference key="55">
    <citation type="journal article" date="2016" name="J. Biol. Chem.">
        <title>Nuclear mitotic apparatus (NuMA) interacts with and regulates astrin at the mitotic spindle.</title>
        <authorList>
            <person name="Chu X."/>
            <person name="Chen X."/>
            <person name="Wan Q."/>
            <person name="Zheng Z."/>
            <person name="Du Q."/>
        </authorList>
    </citation>
    <scope>FUNCTION</scope>
    <scope>INTERACTION WITH GPSM2 AND SPAG5</scope>
    <scope>SUBCELLULAR LOCATION</scope>
</reference>
<reference key="56">
    <citation type="journal article" date="2017" name="Nat. Struct. Mol. Biol.">
        <title>Site-specific mapping of the human SUMO proteome reveals co-modification with phosphorylation.</title>
        <authorList>
            <person name="Hendriks I.A."/>
            <person name="Lyon D."/>
            <person name="Young C."/>
            <person name="Jensen L.J."/>
            <person name="Vertegaal A.C."/>
            <person name="Nielsen M.L."/>
        </authorList>
    </citation>
    <scope>SUMOYLATION [LARGE SCALE ANALYSIS] AT LYS-1699; LYS-1766 AND LYS-1822</scope>
    <scope>IDENTIFICATION BY MASS SPECTROMETRY [LARGE SCALE ANALYSIS]</scope>
</reference>
<reference key="57">
    <citation type="journal article" date="1999" name="EMBO J.">
        <title>Self assembly of NuMA: multiarm oligomers as structural units of a nuclear lattice.</title>
        <authorList>
            <person name="Harborth J."/>
            <person name="Wang J."/>
            <person name="Gueth-Hallonet C."/>
            <person name="Weber K."/>
            <person name="Osborn M."/>
        </authorList>
    </citation>
    <scope>ELECTRON MICROSCOPY</scope>
    <scope>SUBUNIT</scope>
    <scope>SUBCELLULAR LOCATION</scope>
    <scope>PUTATIVE STRUCTURAL FUNCTION</scope>
</reference>
<reference key="58">
    <citation type="journal article" date="2011" name="Mol. Cell">
        <title>LGN/mInsc and LGN/NuMA complex structures suggest distinct functions in asymmetric cell division for the Par3/mInsc/LGN and Galphai/LGN/NuMA pathways.</title>
        <authorList>
            <person name="Zhu J."/>
            <person name="Wen W."/>
            <person name="Zheng Z."/>
            <person name="Shang Y."/>
            <person name="Wei Z."/>
            <person name="Xiao Z."/>
            <person name="Pan Z."/>
            <person name="Du Q."/>
            <person name="Wang W."/>
            <person name="Zhang M."/>
        </authorList>
    </citation>
    <scope>X-RAY CRYSTALLOGRAPHY (2.30 ANGSTROMS) OF 1899-1926 IN COMPLEX WITH GPSM2</scope>
    <scope>FUNCTION</scope>
    <scope>INTERACTION WITH GPSM2</scope>
    <scope>SUBCELLULAR LOCATION</scope>
    <scope>MUTAGENESIS OF GLU-1910</scope>
    <scope>DOMAIN</scope>
</reference>
<reference key="59">
    <citation type="journal article" date="2015" name="Mol. Biol. Cell">
        <title>The nucleoporin ALADIN regulates Aurora A localization to ensure robust mitotic spindle formation.</title>
        <authorList>
            <person name="Carvalhal S."/>
            <person name="Ribeiro S.A."/>
            <person name="Arocena M."/>
            <person name="Kasciukovic T."/>
            <person name="Temme A."/>
            <person name="Koehler K."/>
            <person name="Huebner A."/>
            <person name="Griffis E.R."/>
        </authorList>
    </citation>
    <scope>SUBCELLULAR LOCATION</scope>
</reference>
<accession>Q14980</accession>
<accession>H0YH75</accession>
<accession>Q14981</accession>
<accession>Q9BTE9</accession>
<feature type="chain" id="PRO_0000057998" description="Nuclear mitotic apparatus protein 1">
    <location>
        <begin position="1"/>
        <end position="2115"/>
    </location>
</feature>
<feature type="region of interest" description="Head (Globular)">
    <location>
        <begin position="1"/>
        <end position="212"/>
    </location>
</feature>
<feature type="region of interest" description="Disordered" evidence="3">
    <location>
        <begin position="549"/>
        <end position="593"/>
    </location>
</feature>
<feature type="region of interest" description="Disordered" evidence="3">
    <location>
        <begin position="746"/>
        <end position="766"/>
    </location>
</feature>
<feature type="region of interest" description="Disordered" evidence="3">
    <location>
        <begin position="926"/>
        <end position="958"/>
    </location>
</feature>
<feature type="region of interest" description="Disordered" evidence="3">
    <location>
        <begin position="988"/>
        <end position="1013"/>
    </location>
</feature>
<feature type="region of interest" description="Disordered" evidence="3">
    <location>
        <begin position="1090"/>
        <end position="1225"/>
    </location>
</feature>
<feature type="region of interest" description="Disordered" evidence="3">
    <location>
        <begin position="1275"/>
        <end position="1296"/>
    </location>
</feature>
<feature type="region of interest" description="Membrane-binding domain 1" evidence="25">
    <location>
        <begin position="1699"/>
        <end position="1876"/>
    </location>
</feature>
<feature type="region of interest" description="Tail (Globular)">
    <location>
        <begin position="1700"/>
        <end position="2115"/>
    </location>
</feature>
<feature type="region of interest" description="Disordered" evidence="3">
    <location>
        <begin position="1734"/>
        <end position="1761"/>
    </location>
</feature>
<feature type="region of interest" description="4.1-binding domain" evidence="23 25">
    <location>
        <begin position="1788"/>
        <end position="1810"/>
    </location>
</feature>
<feature type="region of interest" description="Disordered" evidence="3">
    <location>
        <begin position="1826"/>
        <end position="1901"/>
    </location>
</feature>
<feature type="region of interest" description="Tubulin-binding domain" evidence="9 11">
    <location>
        <begin position="1882"/>
        <end position="1985"/>
    </location>
</feature>
<feature type="region of interest" description="GPSM2-binding domain" evidence="8 11 18 23">
    <location>
        <begin position="1892"/>
        <end position="1926"/>
    </location>
</feature>
<feature type="region of interest" description="Disordered" evidence="3">
    <location>
        <begin position="1955"/>
        <end position="2115"/>
    </location>
</feature>
<feature type="region of interest" description="Membrane-binding domain 2" evidence="24">
    <location>
        <begin position="1981"/>
        <end position="2060"/>
    </location>
</feature>
<feature type="coiled-coil region" evidence="2">
    <location>
        <begin position="213"/>
        <end position="1699"/>
    </location>
</feature>
<feature type="short sequence motif" description="Tankyrase-binding domain" evidence="10">
    <location>
        <begin position="1742"/>
        <end position="1748"/>
    </location>
</feature>
<feature type="short sequence motif" description="Nuclear localization signal" evidence="30 34">
    <location>
        <begin position="1984"/>
        <end position="1989"/>
    </location>
</feature>
<feature type="compositionally biased region" description="Low complexity" evidence="3">
    <location>
        <begin position="549"/>
        <end position="560"/>
    </location>
</feature>
<feature type="compositionally biased region" description="Basic and acidic residues" evidence="3">
    <location>
        <begin position="561"/>
        <end position="581"/>
    </location>
</feature>
<feature type="compositionally biased region" description="Basic and acidic residues" evidence="3">
    <location>
        <begin position="926"/>
        <end position="950"/>
    </location>
</feature>
<feature type="compositionally biased region" description="Basic and acidic residues" evidence="3">
    <location>
        <begin position="996"/>
        <end position="1013"/>
    </location>
</feature>
<feature type="compositionally biased region" description="Basic and acidic residues" evidence="3">
    <location>
        <begin position="1090"/>
        <end position="1102"/>
    </location>
</feature>
<feature type="compositionally biased region" description="Low complexity" evidence="3">
    <location>
        <begin position="1103"/>
        <end position="1112"/>
    </location>
</feature>
<feature type="compositionally biased region" description="Low complexity" evidence="3">
    <location>
        <begin position="1133"/>
        <end position="1142"/>
    </location>
</feature>
<feature type="compositionally biased region" description="Basic and acidic residues" evidence="3">
    <location>
        <begin position="1145"/>
        <end position="1163"/>
    </location>
</feature>
<feature type="compositionally biased region" description="Basic and acidic residues" evidence="3">
    <location>
        <begin position="1198"/>
        <end position="1224"/>
    </location>
</feature>
<feature type="compositionally biased region" description="Basic and acidic residues" evidence="3">
    <location>
        <begin position="1283"/>
        <end position="1296"/>
    </location>
</feature>
<feature type="compositionally biased region" description="Polar residues" evidence="3">
    <location>
        <begin position="1735"/>
        <end position="1748"/>
    </location>
</feature>
<feature type="compositionally biased region" description="Polar residues" evidence="3">
    <location>
        <begin position="1830"/>
        <end position="1857"/>
    </location>
</feature>
<feature type="compositionally biased region" description="Polar residues" evidence="3">
    <location>
        <begin position="1879"/>
        <end position="1891"/>
    </location>
</feature>
<feature type="compositionally biased region" description="Basic and acidic residues" evidence="3">
    <location>
        <begin position="1955"/>
        <end position="1966"/>
    </location>
</feature>
<feature type="compositionally biased region" description="Basic and acidic residues" evidence="3">
    <location>
        <begin position="2015"/>
        <end position="2032"/>
    </location>
</feature>
<feature type="compositionally biased region" description="Low complexity" evidence="3">
    <location>
        <begin position="2089"/>
        <end position="2108"/>
    </location>
</feature>
<feature type="modified residue" description="Phosphoserine" evidence="59">
    <location>
        <position position="162"/>
    </location>
</feature>
<feature type="modified residue" description="Phosphothreonine" evidence="59">
    <location>
        <position position="163"/>
    </location>
</feature>
<feature type="modified residue" description="Phosphoserine" evidence="52 56 58 59">
    <location>
        <position position="169"/>
    </location>
</feature>
<feature type="modified residue" description="Phosphoserine" evidence="52 55 56">
    <location>
        <position position="203"/>
    </location>
</feature>
<feature type="modified residue" description="Phosphothreonine" evidence="52 56">
    <location>
        <position position="211"/>
    </location>
</feature>
<feature type="modified residue" description="Phosphoserine" evidence="56 58 59">
    <location>
        <position position="271"/>
    </location>
</feature>
<feature type="modified residue" description="N6-acetyllysine" evidence="54">
    <location>
        <position position="379"/>
    </location>
</feature>
<feature type="modified residue" description="Phosphoserine" evidence="49">
    <location>
        <position position="388"/>
    </location>
</feature>
<feature type="modified residue" description="Phosphoserine" evidence="49">
    <location>
        <position position="395"/>
    </location>
</feature>
<feature type="modified residue" description="Phosphoserine" evidence="49">
    <location>
        <position position="820"/>
    </location>
</feature>
<feature type="modified residue" description="N6-acetyllysine" evidence="54">
    <location>
        <position position="891"/>
    </location>
</feature>
<feature type="modified residue" description="Phosphothreonine; by PLK1" evidence="19">
    <location>
        <position position="1047"/>
    </location>
</feature>
<feature type="modified residue" description="Phosphoserine" evidence="56">
    <location>
        <position position="1187"/>
    </location>
</feature>
<feature type="modified residue" description="Phosphoserine" evidence="55 56 59">
    <location>
        <position position="1225"/>
    </location>
</feature>
<feature type="modified residue" description="N6-acetyllysine" evidence="54">
    <location>
        <position position="1511"/>
    </location>
</feature>
<feature type="modified residue" description="Phosphoserine" evidence="49">
    <location>
        <position position="1601"/>
    </location>
</feature>
<feature type="modified residue" description="Phosphoserine" evidence="52">
    <location>
        <position position="1721"/>
    </location>
</feature>
<feature type="modified residue" description="Phosphoserine" evidence="52">
    <location>
        <position position="1724"/>
    </location>
</feature>
<feature type="modified residue" description="Phosphoserine" evidence="52">
    <location>
        <position position="1728"/>
    </location>
</feature>
<feature type="modified residue" description="Phosphoserine" evidence="47 48 49 51 52 53 55 56 57 58 59">
    <location>
        <position position="1757"/>
    </location>
</feature>
<feature type="modified residue" description="Phosphoserine" evidence="49">
    <location>
        <position position="1760"/>
    </location>
</feature>
<feature type="modified residue" description="Phosphoserine; by PLK1" evidence="19 47 52 55 56 58">
    <location>
        <position position="1769"/>
    </location>
</feature>
<feature type="modified residue" description="Phosphoserine; by PLK1" evidence="19 52">
    <location>
        <position position="1772"/>
    </location>
</feature>
<feature type="modified residue" description="Phosphotyrosine" evidence="52">
    <location>
        <position position="1774"/>
    </location>
</feature>
<feature type="modified residue" description="Phosphothreonine" evidence="47 52 55">
    <location>
        <position position="1776"/>
    </location>
</feature>
<feature type="modified residue" description="Phosphoserine" evidence="52 55 59">
    <location>
        <position position="1788"/>
    </location>
</feature>
<feature type="modified residue" description="Phosphoserine; by PLK1" evidence="19 52">
    <location>
        <position position="1789"/>
    </location>
</feature>
<feature type="modified residue" description="Phosphoserine" evidence="52">
    <location>
        <position position="1792"/>
    </location>
</feature>
<feature type="modified residue" description="Phosphoserine" evidence="52 55">
    <location>
        <position position="1800"/>
    </location>
</feature>
<feature type="modified residue" description="Phosphothreonine" evidence="52">
    <location>
        <position position="1804"/>
    </location>
</feature>
<feature type="modified residue" description="Phosphoserine" evidence="52 56 58">
    <location>
        <position position="1830"/>
    </location>
</feature>
<feature type="modified residue" description="Phosphoserine" evidence="52">
    <location>
        <position position="1833"/>
    </location>
</feature>
<feature type="modified residue" description="Phosphoserine; by PLK1" evidence="19 52 58">
    <location>
        <position position="1834"/>
    </location>
</feature>
<feature type="modified residue" description="Phosphotyrosine" evidence="52">
    <location>
        <position position="1836"/>
    </location>
</feature>
<feature type="modified residue" description="Phosphoserine" evidence="47 52 58">
    <location>
        <position position="1840"/>
    </location>
</feature>
<feature type="modified residue" description="Phosphoserine; alternate" evidence="58">
    <location>
        <position position="1844"/>
    </location>
</feature>
<feature type="modified residue" description="Phosphoserine" evidence="52 56 58">
    <location>
        <position position="1862"/>
    </location>
</feature>
<feature type="modified residue" description="Phosphoserine" evidence="52 58">
    <location>
        <position position="1887"/>
    </location>
</feature>
<feature type="modified residue" description="Phosphoserine" evidence="52 56 58">
    <location>
        <position position="1969"/>
    </location>
</feature>
<feature type="modified residue" description="Phosphoserine" evidence="52 56 58">
    <location>
        <position position="1991"/>
    </location>
</feature>
<feature type="modified residue" description="Phosphothreonine" evidence="52 56 58">
    <location>
        <position position="2000"/>
    </location>
</feature>
<feature type="modified residue" description="Phosphoserine" evidence="56">
    <location>
        <position position="2003"/>
    </location>
</feature>
<feature type="modified residue" description="Phosphothreonine; by CDK1" evidence="22 33">
    <location>
        <position position="2015"/>
    </location>
</feature>
<feature type="modified residue" description="Phosphoserine" evidence="58">
    <location>
        <position position="2047"/>
    </location>
</feature>
<feature type="modified residue" description="Phosphothreonine; by CDK1" evidence="22 33 58">
    <location>
        <position position="2055"/>
    </location>
</feature>
<feature type="modified residue" description="Phosphoserine" evidence="58">
    <location>
        <position position="2062"/>
    </location>
</feature>
<feature type="modified residue" description="Phosphoserine" evidence="50">
    <location>
        <position position="2077"/>
    </location>
</feature>
<feature type="modified residue" description="Phosphoserine; by CDK1" evidence="22 33">
    <location>
        <position position="2087"/>
    </location>
</feature>
<feature type="modified residue" description="Phosphothreonine; by CDK1" evidence="22 33 47">
    <location>
        <position position="2106"/>
    </location>
</feature>
<feature type="glycosylation site" description="O-linked (GlcNAc) serine; alternate" evidence="17">
    <location>
        <position position="1844"/>
    </location>
</feature>
<feature type="cross-link" description="Glycyl lysine isopeptide (Lys-Gly) (interchain with G-Cter in SUMO2)" evidence="63">
    <location>
        <position position="1699"/>
    </location>
</feature>
<feature type="cross-link" description="Glycyl lysine isopeptide (Lys-Gly) (interchain with G-Cter in SUMO1); alternate" evidence="60">
    <location>
        <position position="1766"/>
    </location>
</feature>
<feature type="cross-link" description="Glycyl lysine isopeptide (Lys-Gly) (interchain with G-Cter in SUMO2); alternate" evidence="60 61 62 63">
    <location>
        <position position="1766"/>
    </location>
</feature>
<feature type="cross-link" description="Glycyl lysine isopeptide (Lys-Gly) (interchain with G-Cter in SUMO2)" evidence="63">
    <location>
        <position position="1822"/>
    </location>
</feature>
<feature type="splice variant" id="VSP_054146" description="In isoform 5." evidence="38">
    <location>
        <begin position="414"/>
        <end position="1549"/>
    </location>
</feature>
<feature type="splice variant" id="VSP_012910" description="In isoform 2." evidence="37">
    <location>
        <begin position="1536"/>
        <end position="1549"/>
    </location>
</feature>
<feature type="splice variant" id="VSP_044378" description="In isoform 3." evidence="41">
    <original>LDLSCEEGTPLSITSKLPRTQPDGTSVPGEPASPISQRLPPKVESLESLYFTPIPARSQAPLESSLDSLGDVFLDSGRKTRSARRRTTQIINITMTKKLDVEEPDSANSSFYSTRSAPASQASLRATSSTQSLARLGSPDYGNSALLSLPGYRPTTRSSARRSQAGVSSGAPPGRNSFYMGTCQDEPEQLDDWNRIAELQQRNRVCPPHLKTCYPLESRPSLSLGTITDEEMKTGDPQETLRRASMQPIQIAEGTGITTRQQRKRVSLEPHQGPGTPESKKATSCFPRPMTPRDRHEGRKQSTTEAQKKAAPASTKQADRRQSMAFSILNTPKKLGNSLLRRGASKKALSKASPNTRSGTRRSPRIATTTASAATAAAIGATPRAKGKAKH</original>
    <variation>SQANSSQTPRDSDACPHPGLVPGPSLAPSRSWPRGPGAWTVWALSLPCLLFS</variation>
    <location>
        <begin position="1725"/>
        <end position="2115"/>
    </location>
</feature>
<feature type="splice variant" id="VSP_044379" description="In isoform 4." evidence="41">
    <original>SKLPRTQPDGTSVPGEPASPISQRLPPKVESLESLYFTPIPARSQAPLESSLDSLGDVFLDSGRKTRSARRRTTQIINITMTKKLDVEEPDSANSSFYSTRSAPASQASLRATSSTQSLARLGSPDYGNSALLSLPGYRPTTRSSARRSQAGVSSGAPPGRNSFYMGTCQDEPEQLDDWNRIAELQQRNRVCPPHLKTCYPLESRPSLSLGTITDEEMKTGDPQETLRRASMQPIQIAEGTGITTRQQRKRVSLEPHQGPGTPESKKATSCFPRPMTPRDRHEGRKQSTTEAQKKAAPASTKQADRRQSMAFSILNTPKKLGNSLLRRGASKKALSKASPNTRSGTRRSPRIATTTASAATAAAIGATPRAKGKAKH</original>
    <variation>RSGGSLPPYVCLWSACCLSGCILVR</variation>
    <location>
        <begin position="1739"/>
        <end position="2115"/>
    </location>
</feature>
<feature type="sequence variant" id="VAR_031679" description="In dbSNP:rs34239655.">
    <original>K</original>
    <variation>R</variation>
    <location>
        <position position="242"/>
    </location>
</feature>
<feature type="sequence variant" id="VAR_031680" description="In dbSNP:rs3750913.">
    <original>A</original>
    <variation>G</variation>
    <location>
        <position position="794"/>
    </location>
</feature>
<feature type="sequence variant" id="VAR_031681" description="In dbSNP:rs34311364.">
    <original>E</original>
    <variation>D</variation>
    <location>
        <position position="1153"/>
    </location>
</feature>
<feature type="sequence variant" id="VAR_031682" description="In dbSNP:rs7949430.">
    <original>V</original>
    <variation>M</variation>
    <location>
        <position position="1825"/>
    </location>
</feature>
<feature type="sequence variant" id="VAR_031683" description="In dbSNP:rs35586429.">
    <original>Y</original>
    <variation>H</variation>
    <location>
        <position position="1836"/>
    </location>
</feature>
<feature type="sequence variant" id="VAR_051248" description="In dbSNP:rs5743685.">
    <original>A</original>
    <variation>T</variation>
    <location>
        <position position="2049"/>
    </location>
</feature>
<feature type="mutagenesis site" description="Abolishes interaction with GPSM2." evidence="18">
    <original>E</original>
    <variation>A</variation>
    <location>
        <position position="1910"/>
    </location>
</feature>
<feature type="mutagenesis site" description="No effect on nuclear localization." evidence="34">
    <original>R</original>
    <variation>G</variation>
    <location>
        <position position="1984"/>
    </location>
</feature>
<feature type="mutagenesis site" description="Abolishes nuclear localization." evidence="34">
    <original>K</original>
    <variation>E</variation>
    <location>
        <position position="1988"/>
    </location>
</feature>
<feature type="mutagenesis site" description="Abolishes association with the mitotic spindle. Increases premature accumulation at the cell cortex during metaphase; when associated with A-2055 and A-2087." evidence="21 33">
    <original>T</original>
    <variation>A</variation>
    <location>
        <position position="2015"/>
    </location>
</feature>
<feature type="mutagenesis site" description="Increases premature accumulation at the cell membrane of the polar cortical region in prophase and metaphase. Reduces association with the mitotic spindle. Increased randomization of spindle orientation. Increases premature accumulation at the cell cortex during metaphase; when associated with A-2015 and A-2087." evidence="21 22 23 24 25 33">
    <original>T</original>
    <variation>A</variation>
    <location>
        <position position="2055"/>
    </location>
</feature>
<feature type="mutagenesis site" description="Increases localization at the spindle poles. Decreases localization at the cell cortex." evidence="23">
    <original>T</original>
    <variation>D</variation>
    <location>
        <position position="2055"/>
    </location>
</feature>
<feature type="mutagenesis site" description="Absence of cell membrane association even in anaphase. Increased localization at spindle poles and chromosome congression defects. Does not localize to the cortex in either metaphase or anaphase. Increased randomization of spindle orientation." evidence="22 24">
    <original>T</original>
    <variation>E</variation>
    <location>
        <position position="2055"/>
    </location>
</feature>
<feature type="mutagenesis site" description="Abolishes association with the mitotic spindle. Increases premature accumulation at the cell cortex during metaphase; when associated with A-2015 and A-2055." evidence="21 33">
    <original>S</original>
    <variation>A</variation>
    <location>
        <position position="2087"/>
    </location>
</feature>
<feature type="mutagenesis site" description="Abolishes association with the mitotic spindle." evidence="33">
    <original>T</original>
    <variation>A</variation>
    <location>
        <position position="2106"/>
    </location>
</feature>
<feature type="sequence conflict" description="In Ref. 2; CAA77670." evidence="43" ref="2">
    <original>Q</original>
    <variation>L</variation>
    <location>
        <position position="772"/>
    </location>
</feature>
<feature type="sequence conflict" description="In Ref. 2; CAA77670." evidence="43" ref="2">
    <original>ER</original>
    <variation>DG</variation>
    <location>
        <begin position="815"/>
        <end position="816"/>
    </location>
</feature>
<feature type="sequence conflict" description="In Ref. 2; CAA77670." evidence="43" ref="2">
    <original>E</original>
    <variation>K</variation>
    <location>
        <position position="873"/>
    </location>
</feature>
<feature type="sequence conflict" description="In Ref. 2; CAA77670." evidence="43" ref="2">
    <original>L</original>
    <variation>F</variation>
    <location>
        <position position="1589"/>
    </location>
</feature>
<feature type="sequence conflict" description="In Ref. 3; Z14227/Z14228." evidence="43" ref="3">
    <original>S</original>
    <variation>T</variation>
    <location>
        <position position="1637"/>
    </location>
</feature>
<feature type="sequence conflict" description="In Ref. 3; Z14227/Z14228." evidence="43" ref="3">
    <original>S</original>
    <variation>T</variation>
    <location>
        <position position="1682"/>
    </location>
</feature>
<feature type="sequence conflict" description="In Ref. 3; CAA77669." evidence="43" ref="3">
    <original>L</original>
    <variation>Q</variation>
    <location>
        <position position="1798"/>
    </location>
</feature>
<feature type="helix" evidence="66">
    <location>
        <begin position="5"/>
        <end position="17"/>
    </location>
</feature>
<feature type="strand" evidence="66">
    <location>
        <begin position="20"/>
        <end position="22"/>
    </location>
</feature>
<feature type="helix" evidence="66">
    <location>
        <begin position="27"/>
        <end position="30"/>
    </location>
</feature>
<feature type="helix" evidence="66">
    <location>
        <begin position="34"/>
        <end position="44"/>
    </location>
</feature>
<feature type="helix" evidence="66">
    <location>
        <begin position="48"/>
        <end position="52"/>
    </location>
</feature>
<feature type="helix" evidence="66">
    <location>
        <begin position="57"/>
        <end position="70"/>
    </location>
</feature>
<feature type="helix" evidence="66">
    <location>
        <begin position="84"/>
        <end position="88"/>
    </location>
</feature>
<feature type="helix" evidence="66">
    <location>
        <begin position="92"/>
        <end position="107"/>
    </location>
</feature>
<feature type="strand" evidence="66">
    <location>
        <begin position="109"/>
        <end position="111"/>
    </location>
</feature>
<feature type="helix" evidence="66">
    <location>
        <begin position="116"/>
        <end position="118"/>
    </location>
</feature>
<feature type="helix" evidence="66">
    <location>
        <begin position="121"/>
        <end position="137"/>
    </location>
</feature>
<feature type="strand" evidence="66">
    <location>
        <begin position="140"/>
        <end position="142"/>
    </location>
</feature>
<feature type="helix" evidence="66">
    <location>
        <begin position="143"/>
        <end position="152"/>
    </location>
</feature>
<feature type="turn" evidence="64">
    <location>
        <begin position="1917"/>
        <end position="1919"/>
    </location>
</feature>
<feature type="helix" evidence="64">
    <location>
        <begin position="1920"/>
        <end position="1922"/>
    </location>
</feature>
<feature type="strand" evidence="65">
    <location>
        <begin position="1995"/>
        <end position="1997"/>
    </location>
</feature>
<sequence length="2115" mass="238260">MTLHATRGAALLSWVNSLHVADPVEAVLQLQDCSIFIKIIDRIHGTEEGQQILKQPVSERLDFVCSFLQKNRKHPSSPECLVSAQKVLEGSELELAKMTMLLLYHSTMSSKSPRDWEQFEYKIQAELAVILKFVLDHEDGLNLNEDLENFLQKAPVPSTCSSTFPEELSPPSHQAKREIRFLELQKVASSSSGNNFLSGSPASPMGDILQTPQFQMRRLKKQLADERSNRDELELELAENRKLLTEKDAQIAMMQQRIDRLALLNEKQAASPLEPKELEELRDKNESLTMRLHETLKQCQDLKTEKSQMDRKINQLSEENGDLSFKLREFASHLQQLQDALNELTEEHSKATQEWLEKQAQLEKELSAALQDKKCLEEKNEILQGKLSQLEEHLSQLQDNPPQEKGEVLGDVLQLETLKQEAATLAANNTQLQARVEMLETERGQQEAKLLAERGHFEEEKQQLSSLITDLQSSISNLSQAKEELEQASQAHGARLTAQVASLTSELTTLNATIQQQDQELAGLKQQAKEKQAQLAQTLQQQEQASQGLRHQVEQLSSSLKQKEQQLKEVAEKQEATRQDHAQQLATAAEEREASLRERDAALKQLEALEKEKAAKLEILQQQLQVANEARDSAQTSVTQAQREKAELSRKVEELQACVETARQEQHEAQAQVAELELQLRSEQQKATEKERVAQEKDQLQEQLQALKESLKVTKGSLEEEKRRAADALEEQQRCISELKAETRSLVEQHKRERKELEEERAGRKGLEARLQQLGEAHQAETEVLRRELAEAMAAQHTAESECEQLVKEVAAWRERYEDSQQEEAQYGAMFQEQLMTLKEECEKARQELQEAKEKVAGIESHSELQISRQQNELAELHANLARALQQVQEKEVRAQKLADDLSTLQEKMAATSKEVARLETLVRKAGEQQETASRELVKEPARAGDRQPEWLEEQQGRQFCSTQAALQAMEREAEQMGNELERLRAALMESQGQQQEERGQQEREVARLTQERGRAQADLALEKAARAELEMRLQNALNEQRVEFATLQEALAHALTEKEGKDQELAKLRGLEAAQIKELEELRQTVKQLKEQLAKKEKEHASGSGAQSEAAGRTEPTGPKLEALRAEVSKLEQQCQKQQEQADSLERSLEAERASRAERDSALETLQGQLEEKAQELGHSQSALASAQRELAAFRTKVQDHSKAEDEWKAQVARGRQEAERKNSLISSLEEEVSILNRQVLEKEGESKELKRLVMAESEKSQKLEERLRLLQAETASNSARAAERSSALREEVQSLREEAEKQRVASENLRQELTSQAERAEELGQELKAWQEKFFQKEQALSTLQLEHTSTQALVSELLPAKHLCQQLQAEQAAAEKRHREELEQSKQAAGGLRAELLRAQRELGELIPLRQKVAEQERTAQQLRAEKASYAEQLSMLKKAHGLLAEENRGLGERANLGRQFLEVELDQAREKYVQELAAVRADAETRLAEVQREAQSTARELEVMTAKYEGAKVKVLEERQRFQEERQKLTAQVEQLEVFQREQTKQVEELSKKLADSDQASKVQQQKLKAVQAQGGESQQEAQRLQAQLNELQAQLSQKEQAAEHYKLQMEKAKTHYDAKKQQNQELQEQLRSLEQLQKENKELRAEAERLGHELQQAGLKTKEAEQTCRHLTAQVRSLEAQVAHADQQLRDLGKFQVATDALKSREPQAKPQLDLSIDSLDLSCEEGTPLSITSKLPRTQPDGTSVPGEPASPISQRLPPKVESLESLYFTPIPARSQAPLESSLDSLGDVFLDSGRKTRSARRRTTQIINITMTKKLDVEEPDSANSSFYSTRSAPASQASLRATSSTQSLARLGSPDYGNSALLSLPGYRPTTRSSARRSQAGVSSGAPPGRNSFYMGTCQDEPEQLDDWNRIAELQQRNRVCPPHLKTCYPLESRPSLSLGTITDEEMKTGDPQETLRRASMQPIQIAEGTGITTRQQRKRVSLEPHQGPGTPESKKATSCFPRPMTPRDRHEGRKQSTTEAQKKAAPASTKQADRRQSMAFSILNTPKKLGNSLLRRGASKKALSKASPNTRSGTRRSPRIATTTASAATAAAIGATPRAKGKAKH</sequence>
<gene>
    <name evidence="46" type="primary">NUMA1</name>
    <name evidence="42" type="synonym">NMP22</name>
    <name evidence="36" type="synonym">NUMA</name>
</gene>
<keyword id="KW-0002">3D-structure</keyword>
<keyword id="KW-0007">Acetylation</keyword>
<keyword id="KW-0013">ADP-ribosylation</keyword>
<keyword id="KW-0025">Alternative splicing</keyword>
<keyword id="KW-0131">Cell cycle</keyword>
<keyword id="KW-0132">Cell division</keyword>
<keyword id="KW-1003">Cell membrane</keyword>
<keyword id="KW-0158">Chromosome</keyword>
<keyword id="KW-0159">Chromosome partition</keyword>
<keyword id="KW-0175">Coiled coil</keyword>
<keyword id="KW-0963">Cytoplasm</keyword>
<keyword id="KW-0206">Cytoskeleton</keyword>
<keyword id="KW-0325">Glycoprotein</keyword>
<keyword id="KW-1017">Isopeptide bond</keyword>
<keyword id="KW-0446">Lipid-binding</keyword>
<keyword id="KW-0449">Lipoprotein</keyword>
<keyword id="KW-0472">Membrane</keyword>
<keyword id="KW-0493">Microtubule</keyword>
<keyword id="KW-0498">Mitosis</keyword>
<keyword id="KW-0539">Nucleus</keyword>
<keyword id="KW-0597">Phosphoprotein</keyword>
<keyword id="KW-1267">Proteomics identification</keyword>
<keyword id="KW-1185">Reference proteome</keyword>
<keyword id="KW-0832">Ubl conjugation</keyword>